<sequence>MARTTSQLYDAVPIQSSVVLCSCPSPSMVRTQTESSTPPGIPGGSRQGPAMDGTAAEPRPGAGSLQHAQPPPQPRKKRPEDFKFGKILGEGSFSTVVLARELATSREYAIKILEKRHIIKENKVPYVTRERDVMSRLDHPFFVKLYFTFQDDEKLYFGLSYAKNGELLKYIRKIGSFDETCTRFYTAEIVSALEYLHGKGIIHRDLKPENILLNEDMHIQITDFGTAKVLSPESKQARANSFVGTAQYVSPELLTEKSACKSSDLWALGCIIYQLVAGLPPFRAGNEYLIFQKIIKLEYDFPEKFFPKARDLVEKLLVLDATKRLGCEEMEGYGPLKAHPFFESVTWENLHQQTPPKLTAYLPAMSEDDEDCYGNYDNLLSQFGCMQVSSSSSSHSLSASDTGLPQRSGSNIEQYIHDLDSNSFELDLQFSEDEKRLLLEKQAGGNPWHQFVENNLILKMGPVDKRKGLFARRRQLLLTEGPHLYYVDPVNKVLKGEIPWSQELRPEAKNFKTFFVHTPNRTYYLMDPSGNAHKWCRKIQEVWRQRYQSHPDAAVQ</sequence>
<comment type="function">
    <text evidence="2 6 9 10 12 15 16 21 22 25 26 29 34 35 36 37 39 40">Serine/threonine kinase which acts as a master kinase, phosphorylating and activating a subgroup of the AGC family of protein kinases (PubMed:10226025, PubMed:10480933, PubMed:10995762, PubMed:12167717, PubMed:14585963, PubMed:14604990, PubMed:16207722, PubMed:16251192, PubMed:17327236, PubMed:17371830, PubMed:18835241, PubMed:9094314, PubMed:9368760, PubMed:9445476, PubMed:9445477, PubMed:9707564, PubMed:9768361). Its targets include: protein kinase B (PKB/AKT1, PKB/AKT2, PKB/AKT3), p70 ribosomal protein S6 kinase (RPS6KB1), p90 ribosomal protein S6 kinase (RPS6KA1, RPS6KA2 and RPS6KA3), cyclic AMP-dependent protein kinase (PRKACA), protein kinase C (PRKCD and PRKCZ), serum and glucocorticoid-inducible kinase (SGK1, SGK2 and SGK3), p21-activated kinase-1 (PAK1), TSSK3, protein kinase PKN (PKN1 and PKN2) (PubMed:10226025, PubMed:10480933, PubMed:10995762, PubMed:12167717, PubMed:14585963, PubMed:14604990, PubMed:16207722, PubMed:16251192, PubMed:17327236, PubMed:17371830, PubMed:18835241, PubMed:9094314, PubMed:9368760, PubMed:9445476, PubMed:9707564, PubMed:9768361). Plays a central role in the transduction of signals from insulin by providing the activating phosphorylation to PKB/AKT1, thus propagating the signal to downstream targets controlling cell proliferation and survival, as well as glucose and amino acid uptake and storage (PubMed:10226025, PubMed:12167717, PubMed:9094314). Negatively regulates the TGF-beta-induced signaling by: modulating the association of SMAD3 and SMAD7 with TGF-beta receptor, phosphorylating SMAD2, SMAD3, SMAD4 and SMAD7, preventing the nuclear translocation of SMAD3 and SMAD4 and the translocation of SMAD7 from the nucleus to the cytoplasm in response to TGF-beta (PubMed:17327236). Activates PPARG transcriptional activity and promotes adipocyte differentiation (By similarity). Activates the NF-kappa-B pathway via phosphorylation of IKKB (PubMed:16207722). The tyrosine phosphorylated form is crucial for the regulation of focal adhesions by angiotensin II (PubMed:14585963). Controls proliferation, survival, and growth of developing pancreatic cells (By similarity). Participates in the regulation of Ca(2+) entry and Ca(2+)-activated K(+) channels of mast cells (By similarity). Essential for the motility of vascular endothelial cells (ECs) and is involved in the regulation of their chemotaxis (PubMed:17371830). Plays a critical role in cardiac homeostasis by serving as a dual effector for cell survival and beta-adrenergic response (By similarity). Plays an important role during thymocyte development by regulating the expression of key nutrient receptors on the surface of pre-T cells and mediating Notch-induced cell growth and proliferative responses (By similarity). Provides negative feedback inhibition to toll-like receptor-mediated NF-kappa-B activation in macrophages (By similarity).</text>
</comment>
<comment type="function">
    <molecule>Isoform 3</molecule>
    <text evidence="37">Catalytically inactive.</text>
</comment>
<comment type="catalytic activity">
    <reaction evidence="35">
        <text>L-seryl-[protein] + ATP = O-phospho-L-seryl-[protein] + ADP + H(+)</text>
        <dbReference type="Rhea" id="RHEA:17989"/>
        <dbReference type="Rhea" id="RHEA-COMP:9863"/>
        <dbReference type="Rhea" id="RHEA-COMP:11604"/>
        <dbReference type="ChEBI" id="CHEBI:15378"/>
        <dbReference type="ChEBI" id="CHEBI:29999"/>
        <dbReference type="ChEBI" id="CHEBI:30616"/>
        <dbReference type="ChEBI" id="CHEBI:83421"/>
        <dbReference type="ChEBI" id="CHEBI:456216"/>
        <dbReference type="EC" id="2.7.11.1"/>
    </reaction>
</comment>
<comment type="catalytic activity">
    <reaction evidence="35">
        <text>L-threonyl-[protein] + ATP = O-phospho-L-threonyl-[protein] + ADP + H(+)</text>
        <dbReference type="Rhea" id="RHEA:46608"/>
        <dbReference type="Rhea" id="RHEA-COMP:11060"/>
        <dbReference type="Rhea" id="RHEA-COMP:11605"/>
        <dbReference type="ChEBI" id="CHEBI:15378"/>
        <dbReference type="ChEBI" id="CHEBI:30013"/>
        <dbReference type="ChEBI" id="CHEBI:30616"/>
        <dbReference type="ChEBI" id="CHEBI:61977"/>
        <dbReference type="ChEBI" id="CHEBI:456216"/>
        <dbReference type="EC" id="2.7.11.1"/>
    </reaction>
</comment>
<comment type="activity regulation">
    <text evidence="14 22 28 31">Homodimerization regulates its activity by maintaining the kinase in an autoinhibitory conformation. NPRL2 down-regulates its activity by interfering with tyrosine phosphorylation at the Tyr-9, Tyr-373 and Tyr-376 residues. The 14-3-3 protein YWHAQ acts as a negative regulator by association with the residues surrounding the Ser-241 residue. STRAP positively regulates its activity by enhancing its autophosphorylation and by stimulating its dissociation from YWHAQ. SMAD2, SMAD3, SMAD4 and SMAD7 also positively regulate its activity by stimulating its dissociation from YWHAQ. Activated by phosphorylation on Tyr-9, Tyr-373 and Tyr-376 by INSR in response to insulin.</text>
</comment>
<comment type="subunit">
    <text evidence="6 10 14 15 16 17 21 22 23 25 27 28 30 31">Homodimer in its autoinhibited state. Active as monomer. Interacts with NPRL2, PPARG, PAK1, PTK2B, GRB14, PKN1 (via C-terminus), STRAP and IKKB. The Tyr-9 phosphorylated form interacts with SRC, RASA1 and CRK (via their SH2 domains). Interacts with SGK3 in a phosphorylation-dependent manner. The tyrosine-phosphorylated form interacts with PTPN6. The Ser-241 phosphorylated form interacts with YWHAH and YWHAQ. Binds INSR in response to insulin. Interacts (via PH domain) with SMAD3, SMAD4 and SMAD7. Interacts with PKN2; the interaction stimulates PDPK1 autophosphorylation, its PI(3,4,5)P3-dependent kinase activity toward 'Ser-473' of AKT1 but also activates its kinase activity toward PRKCD and PRKCZ.</text>
</comment>
<comment type="interaction">
    <interactant intactId="EBI-717097">
        <id>O15530</id>
    </interactant>
    <interactant intactId="EBI-296087">
        <id>P31749</id>
        <label>AKT1</label>
    </interactant>
    <organismsDiffer>false</organismsDiffer>
    <experiments>4</experiments>
</comment>
<comment type="interaction">
    <interactant intactId="EBI-717097">
        <id>O15530</id>
    </interactant>
    <interactant intactId="EBI-1052159">
        <id>Q00005</id>
        <label>PPP2R2B</label>
    </interactant>
    <organismsDiffer>false</organismsDiffer>
    <experiments>8</experiments>
</comment>
<comment type="interaction">
    <interactant intactId="EBI-717097">
        <id>O15530</id>
    </interactant>
    <interactant intactId="EBI-2513719">
        <id>Q9Y4P3</id>
        <label>TBL2</label>
    </interactant>
    <organismsDiffer>false</organismsDiffer>
    <experiments>3</experiments>
</comment>
<comment type="interaction">
    <interactant intactId="EBI-717097">
        <id>O15530</id>
    </interactant>
    <interactant intactId="EBI-908831">
        <id>O75385</id>
        <label>ULK1</label>
    </interactant>
    <organismsDiffer>false</organismsDiffer>
    <experiments>2</experiments>
</comment>
<comment type="interaction">
    <interactant intactId="EBI-9087775">
        <id>O15530-4</id>
    </interactant>
    <interactant intactId="EBI-946046">
        <id>P54252</id>
        <label>ATXN3</label>
    </interactant>
    <organismsDiffer>false</organismsDiffer>
    <experiments>3</experiments>
</comment>
<comment type="interaction">
    <interactant intactId="EBI-9087775">
        <id>O15530-4</id>
    </interactant>
    <interactant intactId="EBI-466029">
        <id>P42858</id>
        <label>HTT</label>
    </interactant>
    <organismsDiffer>false</organismsDiffer>
    <experiments>6</experiments>
</comment>
<comment type="interaction">
    <interactant intactId="EBI-9087775">
        <id>O15530-4</id>
    </interactant>
    <interactant intactId="EBI-1055254">
        <id>Q8WXH2</id>
        <label>JPH3</label>
    </interactant>
    <organismsDiffer>false</organismsDiffer>
    <experiments>3</experiments>
</comment>
<comment type="interaction">
    <interactant intactId="EBI-9087775">
        <id>O15530-4</id>
    </interactant>
    <interactant intactId="EBI-524753">
        <id>Q8IUH5</id>
        <label>ZDHHC17</label>
    </interactant>
    <organismsDiffer>false</organismsDiffer>
    <experiments>3</experiments>
</comment>
<comment type="subcellular location">
    <subcellularLocation>
        <location>Cytoplasm</location>
    </subcellularLocation>
    <subcellularLocation>
        <location>Nucleus</location>
    </subcellularLocation>
    <subcellularLocation>
        <location>Cell membrane</location>
        <topology>Peripheral membrane protein</topology>
    </subcellularLocation>
    <subcellularLocation>
        <location>Cell junction</location>
        <location>Focal adhesion</location>
    </subcellularLocation>
    <text>Tyrosine phosphorylation seems to occur only at the cell membrane. Translocates to the cell membrane following insulin stimulation by a mechanism that involves binding to GRB14 and INSR. SRC and HSP90 promote its localization to the cell membrane. Its nuclear localization is dependent on its association with PTPN6 and its phosphorylation at Ser-396. Restricted to the nucleus in neuronal cells while in non-neuronal cells it is found in the cytoplasm. The Ser-241 phosphorylated form is distributed along the perinuclear region in neuronal cells while in non-neuronal cells it is found in both the nucleus and the cytoplasm. IGF1 transiently increases phosphorylation at Ser-241 of neuronal PDPK1, resulting in its translocation to other cellular compartments. The tyrosine-phosphorylated form colocalizes with PTK2B in focal adhesions after angiotensin II stimulation.</text>
</comment>
<comment type="alternative products">
    <event type="alternative splicing"/>
    <isoform>
        <id>O15530-1</id>
        <name>1</name>
        <sequence type="displayed"/>
    </isoform>
    <isoform>
        <id>O15530-2</id>
        <name>2</name>
        <sequence type="described" ref="VSP_004894"/>
    </isoform>
    <isoform>
        <id>O15530-3</id>
        <name>3</name>
        <sequence type="described" ref="VSP_004895"/>
    </isoform>
    <isoform>
        <id>O15530-4</id>
        <name>4</name>
        <sequence type="described" ref="VSP_041902"/>
    </isoform>
    <isoform>
        <id>O15530-5</id>
        <name>5</name>
        <sequence type="described" ref="VSP_044796"/>
    </isoform>
</comment>
<comment type="tissue specificity">
    <text evidence="27">Appears to be expressed ubiquitously. The Tyr-9 phosphorylated form is markedly increased in diseased tissue compared with normal tissue from lung, liver, colon and breast.</text>
</comment>
<comment type="induction">
    <text>Stimulated by insulin, and the oxidants hydrogen peroxide and peroxovanadate.</text>
</comment>
<comment type="domain">
    <text>The PH domain plays a pivotal role in the localization and nuclear import of PDPK1 and is also essential for its homodimerization.</text>
</comment>
<comment type="domain">
    <text evidence="46">The PIF-pocket is a small lobe in the catalytic domain required by the enzyme for the binding to the hydrophobic motif of its substrates. It is an allosteric regulatory site that can accommodate small compounds acting as allosteric inhibitors.</text>
</comment>
<comment type="PTM">
    <text evidence="1 8 11 15 19 23 24 32 41">Phosphorylation on Ser-241 in the activation loop is required for full activity. PDPK1 itself can autophosphorylate Ser-241, leading to its own activation. Autophosphorylation is inhibited by the apoptotic C-terminus cleavage product of PKN2 (By similarity). Tyr-9 phosphorylation is critical for stabilization of both PDPK1 and the PDPK1/SRC complex via HSP90-mediated protection of PDPK1 degradation. Angiotensin II stimulates the tyrosine phosphorylation of PDPK1 in vascular smooth muscle in a calcium- and SRC-dependent manner. Phosphorylated on Tyr-9, Tyr-373 and Tyr-376 by INSR in response to insulin. Palmitate negatively regulates autophosphorylation at Ser-241 and palmitate-induced phosphorylation at Ser-529 and Ser-501 by PKC/PRKCQ negatively regulates its ability to phosphorylate PKB/AKT1. Phosphorylation at Thr-354 by MELK partially inhibits kinase activity, the inhibition is cooperatively enhanced by phosphorylation at Ser-394 and Ser-398 by MAP3K5.</text>
</comment>
<comment type="PTM">
    <text evidence="1">Autophosphorylated; autophosphorylation is inhibited by the apoptotic C-terminus cleavage product of PKN2.</text>
</comment>
<comment type="PTM">
    <text>Monoubiquitinated in the kinase domain, deubiquitinated by USP4.</text>
</comment>
<comment type="similarity">
    <text evidence="45">Belongs to the protein kinase superfamily. AGC Ser/Thr protein kinase family. PDPK1 subfamily.</text>
</comment>
<comment type="sequence caution" evidence="45">
    <conflict type="erroneous initiation">
        <sequence resource="EMBL-CDS" id="BAD93072"/>
    </conflict>
    <text>Extended N-terminus.</text>
</comment>
<proteinExistence type="evidence at protein level"/>
<organism>
    <name type="scientific">Homo sapiens</name>
    <name type="common">Human</name>
    <dbReference type="NCBI Taxonomy" id="9606"/>
    <lineage>
        <taxon>Eukaryota</taxon>
        <taxon>Metazoa</taxon>
        <taxon>Chordata</taxon>
        <taxon>Craniata</taxon>
        <taxon>Vertebrata</taxon>
        <taxon>Euteleostomi</taxon>
        <taxon>Mammalia</taxon>
        <taxon>Eutheria</taxon>
        <taxon>Euarchontoglires</taxon>
        <taxon>Primates</taxon>
        <taxon>Haplorrhini</taxon>
        <taxon>Catarrhini</taxon>
        <taxon>Hominidae</taxon>
        <taxon>Homo</taxon>
    </lineage>
</organism>
<accession>O15530</accession>
<accession>H0Y4Z0</accession>
<accession>Q59EH6</accession>
<accession>Q6FI20</accession>
<accession>Q8IV52</accession>
<accession>Q9BRD5</accession>
<feature type="chain" id="PRO_0000086500" description="3-phosphoinositide-dependent protein kinase 1">
    <location>
        <begin position="1"/>
        <end position="556"/>
    </location>
</feature>
<feature type="domain" description="Protein kinase" evidence="3">
    <location>
        <begin position="82"/>
        <end position="342"/>
    </location>
</feature>
<feature type="domain" description="PH">
    <location>
        <begin position="459"/>
        <end position="550"/>
    </location>
</feature>
<feature type="region of interest" description="Disordered" evidence="5">
    <location>
        <begin position="26"/>
        <end position="80"/>
    </location>
</feature>
<feature type="region of interest" description="PIF-pocket" evidence="46">
    <location>
        <begin position="113"/>
        <end position="157"/>
    </location>
</feature>
<feature type="compositionally biased region" description="Polar residues" evidence="5">
    <location>
        <begin position="28"/>
        <end position="38"/>
    </location>
</feature>
<feature type="active site" description="Proton acceptor" evidence="3 4">
    <location>
        <position position="205"/>
    </location>
</feature>
<feature type="binding site" evidence="13 18 33">
    <location>
        <begin position="92"/>
        <end position="94"/>
    </location>
    <ligand>
        <name>ATP</name>
        <dbReference type="ChEBI" id="CHEBI:30616"/>
    </ligand>
</feature>
<feature type="binding site" evidence="13 18 33">
    <location>
        <position position="111"/>
    </location>
    <ligand>
        <name>ATP</name>
        <dbReference type="ChEBI" id="CHEBI:30616"/>
    </ligand>
</feature>
<feature type="binding site" evidence="13 18 33">
    <location>
        <begin position="160"/>
        <end position="162"/>
    </location>
    <ligand>
        <name>ATP</name>
        <dbReference type="ChEBI" id="CHEBI:30616"/>
    </ligand>
</feature>
<feature type="binding site" evidence="13 18 33">
    <location>
        <position position="166"/>
    </location>
    <ligand>
        <name>ATP</name>
        <dbReference type="ChEBI" id="CHEBI:30616"/>
    </ligand>
</feature>
<feature type="binding site" evidence="33">
    <location>
        <position position="209"/>
    </location>
    <ligand>
        <name>ATP</name>
        <dbReference type="ChEBI" id="CHEBI:30616"/>
    </ligand>
</feature>
<feature type="binding site" evidence="13 18 33">
    <location>
        <position position="223"/>
    </location>
    <ligand>
        <name>ATP</name>
        <dbReference type="ChEBI" id="CHEBI:30616"/>
    </ligand>
</feature>
<feature type="modified residue" description="Phosphotyrosine; by SRC and INSR" evidence="11 15 23">
    <location>
        <position position="9"/>
    </location>
</feature>
<feature type="modified residue" description="Phosphoserine" evidence="8">
    <location>
        <position position="25"/>
    </location>
</feature>
<feature type="modified residue" description="Phosphoserine; by autocatalysis" evidence="8 11 20 24 41">
    <location>
        <position position="241"/>
    </location>
</feature>
<feature type="modified residue" description="N6-acetyllysine" evidence="2">
    <location>
        <position position="304"/>
    </location>
</feature>
<feature type="modified residue" description="Phosphothreonine; by MELK" evidence="32">
    <location>
        <position position="354"/>
    </location>
</feature>
<feature type="modified residue" description="Phosphotyrosine; by SRC and INSR" evidence="11 15 23">
    <location>
        <position position="373"/>
    </location>
</feature>
<feature type="modified residue" description="Phosphotyrosine; by SRC and INSR" evidence="11 15 23">
    <location>
        <position position="376"/>
    </location>
</feature>
<feature type="modified residue" description="Phosphoserine" evidence="8">
    <location>
        <position position="393"/>
    </location>
</feature>
<feature type="modified residue" description="Phosphoserine; by MAP3K5" evidence="32">
    <location>
        <position position="394"/>
    </location>
</feature>
<feature type="modified residue" description="Phosphoserine" evidence="8 19">
    <location>
        <position position="396"/>
    </location>
</feature>
<feature type="modified residue" description="Phosphoserine; by MAP3K5" evidence="32">
    <location>
        <position position="398"/>
    </location>
</feature>
<feature type="modified residue" description="Phosphoserine" evidence="8">
    <location>
        <position position="410"/>
    </location>
</feature>
<feature type="modified residue" description="Phosphoserine; by PKC/PRKCQ" evidence="2">
    <location>
        <position position="501"/>
    </location>
</feature>
<feature type="modified residue" description="Phosphothreonine; by autocatalysis" evidence="24">
    <location>
        <position position="513"/>
    </location>
</feature>
<feature type="modified residue" description="Phosphoserine; by PKC/PRKCQ" evidence="2">
    <location>
        <position position="529"/>
    </location>
</feature>
<feature type="splice variant" id="VSP_004894" description="In isoform 2." evidence="45">
    <location>
        <begin position="1"/>
        <end position="50"/>
    </location>
</feature>
<feature type="splice variant" id="VSP_041902" description="In isoform 4." evidence="42">
    <original>IKILEKRHIIKENKVPYVTRERDVMSRLDHPFFVKLYFTFQDDEKLYFGLSYAKNGELLKYIRKIGSFDETCTRFYTAEIVSALEYLHGKGIIHRDLKPENILLNEDMHIQITDFGTAKVLSPESKQA</original>
    <variation>T</variation>
    <location>
        <begin position="110"/>
        <end position="237"/>
    </location>
</feature>
<feature type="splice variant" id="VSP_004895" description="In isoform 3." evidence="43">
    <location>
        <begin position="238"/>
        <end position="263"/>
    </location>
</feature>
<feature type="splice variant" id="VSP_044796" description="In isoform 5." evidence="44">
    <original>WHQFVENNLILKMGPVDKRKGLFARRRQLLLTEGPHLYYVDPVNKVLKGEIPWSQELRPEAKNFKTFFVHTPNRTYYLMDPSGNAHKWCRKIQEVWRQRYQSHPDAAVQ</original>
    <variation>CLTGRII</variation>
    <location>
        <begin position="448"/>
        <end position="556"/>
    </location>
</feature>
<feature type="mutagenesis site" description="Slight reduction in pervanadate-stimulated tyrosine phosphorylation." evidence="11">
    <original>Y</original>
    <variation>F</variation>
    <location>
        <position position="9"/>
    </location>
</feature>
<feature type="mutagenesis site" description="No effect." evidence="8">
    <original>S</original>
    <variation>A</variation>
    <location>
        <position position="25"/>
    </location>
</feature>
<feature type="mutagenesis site" description="No activation." evidence="8">
    <original>S</original>
    <variation>A</variation>
    <location>
        <position position="241"/>
    </location>
</feature>
<feature type="mutagenesis site" description="3-fold increase in kinase activity." evidence="7">
    <original>A</original>
    <variation>V</variation>
    <location>
        <position position="277"/>
    </location>
</feature>
<feature type="mutagenesis site" description="Abolishes phosphorylation by MELK." evidence="32">
    <original>T</original>
    <variation>A</variation>
    <location>
        <position position="354"/>
    </location>
</feature>
<feature type="mutagenesis site" description="Reduction in basal activity." evidence="11">
    <original>Y</original>
    <variation>F</variation>
    <location>
        <position position="373"/>
    </location>
</feature>
<feature type="mutagenesis site" description="Reduction in basal activity." evidence="11">
    <original>Y</original>
    <variation>F</variation>
    <location>
        <position position="376"/>
    </location>
</feature>
<feature type="mutagenesis site" description="No effect." evidence="8">
    <original>S</original>
    <variation>A</variation>
    <location>
        <position position="393"/>
    </location>
</feature>
<feature type="mutagenesis site" description="Abolishes phosphorylation by MAP3K5; when associated with A-398." evidence="32">
    <original>S</original>
    <variation>A</variation>
    <location>
        <position position="394"/>
    </location>
</feature>
<feature type="mutagenesis site" description="No effect." evidence="8">
    <original>S</original>
    <variation>A</variation>
    <location>
        <position position="396"/>
    </location>
</feature>
<feature type="mutagenesis site" description="Abolishes phosphorylation by MAP3K5; when associated with A-394." evidence="32">
    <original>S</original>
    <variation>A</variation>
    <location>
        <position position="398"/>
    </location>
</feature>
<feature type="mutagenesis site" description="No effect." evidence="8">
    <original>S</original>
    <variation>A</variation>
    <location>
        <position position="410"/>
    </location>
</feature>
<feature type="mutagenesis site" description="No PDGF-dependent translocation to the membrane." evidence="38">
    <original>R</original>
    <variation>A</variation>
    <location>
        <position position="474"/>
    </location>
</feature>
<feature type="mutagenesis site" description="Enhanced kinase activity towards PKB." evidence="31">
    <original>T</original>
    <variation>E</variation>
    <location>
        <position position="513"/>
    </location>
</feature>
<feature type="turn" evidence="53">
    <location>
        <begin position="7"/>
        <end position="9"/>
    </location>
</feature>
<feature type="helix" evidence="52">
    <location>
        <begin position="79"/>
        <end position="81"/>
    </location>
</feature>
<feature type="strand" evidence="52">
    <location>
        <begin position="82"/>
        <end position="90"/>
    </location>
</feature>
<feature type="strand" evidence="52">
    <location>
        <begin position="95"/>
        <end position="101"/>
    </location>
</feature>
<feature type="turn" evidence="52">
    <location>
        <begin position="102"/>
        <end position="104"/>
    </location>
</feature>
<feature type="strand" evidence="52">
    <location>
        <begin position="107"/>
        <end position="114"/>
    </location>
</feature>
<feature type="helix" evidence="52">
    <location>
        <begin position="115"/>
        <end position="120"/>
    </location>
</feature>
<feature type="helix" evidence="52">
    <location>
        <begin position="124"/>
        <end position="136"/>
    </location>
</feature>
<feature type="strand" evidence="52">
    <location>
        <begin position="145"/>
        <end position="150"/>
    </location>
</feature>
<feature type="strand" evidence="52">
    <location>
        <begin position="152"/>
        <end position="159"/>
    </location>
</feature>
<feature type="strand" evidence="50">
    <location>
        <begin position="163"/>
        <end position="166"/>
    </location>
</feature>
<feature type="helix" evidence="52">
    <location>
        <begin position="167"/>
        <end position="174"/>
    </location>
</feature>
<feature type="helix" evidence="52">
    <location>
        <begin position="179"/>
        <end position="198"/>
    </location>
</feature>
<feature type="helix" evidence="52">
    <location>
        <begin position="208"/>
        <end position="210"/>
    </location>
</feature>
<feature type="strand" evidence="52">
    <location>
        <begin position="211"/>
        <end position="213"/>
    </location>
</feature>
<feature type="strand" evidence="52">
    <location>
        <begin position="219"/>
        <end position="221"/>
    </location>
</feature>
<feature type="helix" evidence="48">
    <location>
        <begin position="224"/>
        <end position="226"/>
    </location>
</feature>
<feature type="turn" evidence="52">
    <location>
        <begin position="232"/>
        <end position="235"/>
    </location>
</feature>
<feature type="strand" evidence="49">
    <location>
        <begin position="238"/>
        <end position="240"/>
    </location>
</feature>
<feature type="helix" evidence="52">
    <location>
        <begin position="246"/>
        <end position="248"/>
    </location>
</feature>
<feature type="helix" evidence="52">
    <location>
        <begin position="251"/>
        <end position="256"/>
    </location>
</feature>
<feature type="helix" evidence="52">
    <location>
        <begin position="261"/>
        <end position="277"/>
    </location>
</feature>
<feature type="helix" evidence="52">
    <location>
        <begin position="287"/>
        <end position="295"/>
    </location>
</feature>
<feature type="strand" evidence="51">
    <location>
        <begin position="303"/>
        <end position="305"/>
    </location>
</feature>
<feature type="helix" evidence="52">
    <location>
        <begin position="307"/>
        <end position="316"/>
    </location>
</feature>
<feature type="helix" evidence="52">
    <location>
        <begin position="321"/>
        <end position="323"/>
    </location>
</feature>
<feature type="helix" evidence="52">
    <location>
        <begin position="328"/>
        <end position="330"/>
    </location>
</feature>
<feature type="helix" evidence="52">
    <location>
        <begin position="333"/>
        <end position="337"/>
    </location>
</feature>
<feature type="helix" evidence="52">
    <location>
        <begin position="340"/>
        <end position="342"/>
    </location>
</feature>
<feature type="helix" evidence="52">
    <location>
        <begin position="347"/>
        <end position="352"/>
    </location>
</feature>
<feature type="helix" evidence="47">
    <location>
        <begin position="412"/>
        <end position="415"/>
    </location>
</feature>
<feature type="strand" evidence="47">
    <location>
        <begin position="416"/>
        <end position="420"/>
    </location>
</feature>
<feature type="strand" evidence="47">
    <location>
        <begin position="423"/>
        <end position="426"/>
    </location>
</feature>
<feature type="helix" evidence="47">
    <location>
        <begin position="432"/>
        <end position="445"/>
    </location>
</feature>
<feature type="helix" evidence="47">
    <location>
        <begin position="449"/>
        <end position="451"/>
    </location>
</feature>
<feature type="turn" evidence="47">
    <location>
        <begin position="452"/>
        <end position="454"/>
    </location>
</feature>
<feature type="strand" evidence="47">
    <location>
        <begin position="457"/>
        <end position="467"/>
    </location>
</feature>
<feature type="strand" evidence="47">
    <location>
        <begin position="470"/>
        <end position="479"/>
    </location>
</feature>
<feature type="turn" evidence="47">
    <location>
        <begin position="480"/>
        <end position="482"/>
    </location>
</feature>
<feature type="strand" evidence="47">
    <location>
        <begin position="483"/>
        <end position="488"/>
    </location>
</feature>
<feature type="turn" evidence="47">
    <location>
        <begin position="489"/>
        <end position="492"/>
    </location>
</feature>
<feature type="strand" evidence="47">
    <location>
        <begin position="493"/>
        <end position="498"/>
    </location>
</feature>
<feature type="strand" evidence="47">
    <location>
        <begin position="505"/>
        <end position="518"/>
    </location>
</feature>
<feature type="strand" evidence="47">
    <location>
        <begin position="521"/>
        <end position="526"/>
    </location>
</feature>
<feature type="helix" evidence="47">
    <location>
        <begin position="532"/>
        <end position="547"/>
    </location>
</feature>
<gene>
    <name type="primary">PDPK1</name>
    <name type="synonym">PDK1</name>
</gene>
<reference key="1">
    <citation type="journal article" date="1997" name="Curr. Biol.">
        <title>Characterization of a 3-phosphoinositide-dependent protein kinase which phosphorylates and activates protein kinase B alpha.</title>
        <authorList>
            <person name="Alessi D.R."/>
            <person name="James S.R."/>
            <person name="Downes C.P."/>
            <person name="Holmes A.B."/>
            <person name="Gaffney P.R.J."/>
            <person name="Reese C.B."/>
            <person name="Cohen P."/>
        </authorList>
    </citation>
    <scope>NUCLEOTIDE SEQUENCE [MRNA] (ISOFORM 1)</scope>
    <scope>FUNCTION IN PHOSPHORYLATION OF PKB/AKT1</scope>
</reference>
<reference key="2">
    <citation type="journal article" date="1997" name="Curr. Biol.">
        <title>3-phosphoinositide-dependent protein kinase-1 (PDK1): structural and functional homology with the Drosophila DSTPK61 kinase.</title>
        <authorList>
            <person name="Alessi D.R."/>
            <person name="Deak M."/>
            <person name="Casamayor A."/>
            <person name="Caudwell F.B."/>
            <person name="Morrice N.A."/>
            <person name="Norman D.G."/>
            <person name="Gaffney P.R.J."/>
            <person name="Reese C.B."/>
            <person name="MacDougall C.N."/>
            <person name="Harbison D."/>
            <person name="Ashworth A."/>
            <person name="Bownes M."/>
        </authorList>
    </citation>
    <scope>NUCLEOTIDE SEQUENCE [MRNA] (ISOFORM 1)</scope>
    <scope>FUNCTION</scope>
    <scope>CATALYTIC ACTIVITY</scope>
</reference>
<reference key="3">
    <citation type="journal article" date="1998" name="Science">
        <title>Protein kinase B kinases that mediate phosphatidylinositol 3,4,5-trisphosphate-dependent activation of protein kinase B.</title>
        <authorList>
            <person name="Stephens L.R."/>
            <person name="Anderson K.E."/>
            <person name="Stokoe D."/>
            <person name="Erdjument-Bromage H."/>
            <person name="Painter G.F."/>
            <person name="Holmes A.B."/>
            <person name="Gaffney P.R.J."/>
            <person name="Reese C.B."/>
            <person name="McCormick F."/>
            <person name="Tempst P."/>
            <person name="Coadwell W.J."/>
            <person name="Hawkins P.T."/>
        </authorList>
    </citation>
    <scope>NUCLEOTIDE SEQUENCE [MRNA] (ISOFORMS 1 AND 3)</scope>
    <scope>FUNCTION</scope>
    <scope>FUNCTION (ISOFORM 3)</scope>
    <source>
        <tissue>Myeloid</tissue>
    </source>
</reference>
<reference key="4">
    <citation type="submission" date="2004-06" db="EMBL/GenBank/DDBJ databases">
        <title>Cloning of human full open reading frames in Gateway(TM) system entry vector (pDONR201).</title>
        <authorList>
            <person name="Ebert L."/>
            <person name="Schick M."/>
            <person name="Neubert P."/>
            <person name="Schatten R."/>
            <person name="Henze S."/>
            <person name="Korn B."/>
        </authorList>
    </citation>
    <scope>NUCLEOTIDE SEQUENCE [LARGE SCALE MRNA] (ISOFORM 1)</scope>
</reference>
<reference key="5">
    <citation type="submission" date="2005-03" db="EMBL/GenBank/DDBJ databases">
        <title>Homo sapiens protein coding cDNA.</title>
        <authorList>
            <person name="Totoki Y."/>
            <person name="Toyoda A."/>
            <person name="Takeda T."/>
            <person name="Sakaki Y."/>
            <person name="Tanaka A."/>
            <person name="Yokoyama S."/>
            <person name="Ohara O."/>
            <person name="Nagase T."/>
            <person name="Kikuno R.F."/>
        </authorList>
    </citation>
    <scope>NUCLEOTIDE SEQUENCE [LARGE SCALE MRNA] (ISOFORM 5)</scope>
    <source>
        <tissue>Brain</tissue>
    </source>
</reference>
<reference key="6">
    <citation type="journal article" date="2004" name="Nature">
        <title>The sequence and analysis of duplication-rich human chromosome 16.</title>
        <authorList>
            <person name="Martin J."/>
            <person name="Han C."/>
            <person name="Gordon L.A."/>
            <person name="Terry A."/>
            <person name="Prabhakar S."/>
            <person name="She X."/>
            <person name="Xie G."/>
            <person name="Hellsten U."/>
            <person name="Chan Y.M."/>
            <person name="Altherr M."/>
            <person name="Couronne O."/>
            <person name="Aerts A."/>
            <person name="Bajorek E."/>
            <person name="Black S."/>
            <person name="Blumer H."/>
            <person name="Branscomb E."/>
            <person name="Brown N.C."/>
            <person name="Bruno W.J."/>
            <person name="Buckingham J.M."/>
            <person name="Callen D.F."/>
            <person name="Campbell C.S."/>
            <person name="Campbell M.L."/>
            <person name="Campbell E.W."/>
            <person name="Caoile C."/>
            <person name="Challacombe J.F."/>
            <person name="Chasteen L.A."/>
            <person name="Chertkov O."/>
            <person name="Chi H.C."/>
            <person name="Christensen M."/>
            <person name="Clark L.M."/>
            <person name="Cohn J.D."/>
            <person name="Denys M."/>
            <person name="Detter J.C."/>
            <person name="Dickson M."/>
            <person name="Dimitrijevic-Bussod M."/>
            <person name="Escobar J."/>
            <person name="Fawcett J.J."/>
            <person name="Flowers D."/>
            <person name="Fotopulos D."/>
            <person name="Glavina T."/>
            <person name="Gomez M."/>
            <person name="Gonzales E."/>
            <person name="Goodstein D."/>
            <person name="Goodwin L.A."/>
            <person name="Grady D.L."/>
            <person name="Grigoriev I."/>
            <person name="Groza M."/>
            <person name="Hammon N."/>
            <person name="Hawkins T."/>
            <person name="Haydu L."/>
            <person name="Hildebrand C.E."/>
            <person name="Huang W."/>
            <person name="Israni S."/>
            <person name="Jett J."/>
            <person name="Jewett P.B."/>
            <person name="Kadner K."/>
            <person name="Kimball H."/>
            <person name="Kobayashi A."/>
            <person name="Krawczyk M.-C."/>
            <person name="Leyba T."/>
            <person name="Longmire J.L."/>
            <person name="Lopez F."/>
            <person name="Lou Y."/>
            <person name="Lowry S."/>
            <person name="Ludeman T."/>
            <person name="Manohar C.F."/>
            <person name="Mark G.A."/>
            <person name="McMurray K.L."/>
            <person name="Meincke L.J."/>
            <person name="Morgan J."/>
            <person name="Moyzis R.K."/>
            <person name="Mundt M.O."/>
            <person name="Munk A.C."/>
            <person name="Nandkeshwar R.D."/>
            <person name="Pitluck S."/>
            <person name="Pollard M."/>
            <person name="Predki P."/>
            <person name="Parson-Quintana B."/>
            <person name="Ramirez L."/>
            <person name="Rash S."/>
            <person name="Retterer J."/>
            <person name="Ricke D.O."/>
            <person name="Robinson D.L."/>
            <person name="Rodriguez A."/>
            <person name="Salamov A."/>
            <person name="Saunders E.H."/>
            <person name="Scott D."/>
            <person name="Shough T."/>
            <person name="Stallings R.L."/>
            <person name="Stalvey M."/>
            <person name="Sutherland R.D."/>
            <person name="Tapia R."/>
            <person name="Tesmer J.G."/>
            <person name="Thayer N."/>
            <person name="Thompson L.S."/>
            <person name="Tice H."/>
            <person name="Torney D.C."/>
            <person name="Tran-Gyamfi M."/>
            <person name="Tsai M."/>
            <person name="Ulanovsky L.E."/>
            <person name="Ustaszewska A."/>
            <person name="Vo N."/>
            <person name="White P.S."/>
            <person name="Williams A.L."/>
            <person name="Wills P.L."/>
            <person name="Wu J.-R."/>
            <person name="Wu K."/>
            <person name="Yang J."/>
            <person name="DeJong P."/>
            <person name="Bruce D."/>
            <person name="Doggett N.A."/>
            <person name="Deaven L."/>
            <person name="Schmutz J."/>
            <person name="Grimwood J."/>
            <person name="Richardson P."/>
            <person name="Rokhsar D.S."/>
            <person name="Eichler E.E."/>
            <person name="Gilna P."/>
            <person name="Lucas S.M."/>
            <person name="Myers R.M."/>
            <person name="Rubin E.M."/>
            <person name="Pennacchio L.A."/>
        </authorList>
    </citation>
    <scope>NUCLEOTIDE SEQUENCE [LARGE SCALE GENOMIC DNA]</scope>
</reference>
<reference key="7">
    <citation type="journal article" date="2004" name="Genome Res.">
        <title>The status, quality, and expansion of the NIH full-length cDNA project: the Mammalian Gene Collection (MGC).</title>
        <authorList>
            <consortium name="The MGC Project Team"/>
        </authorList>
    </citation>
    <scope>NUCLEOTIDE SEQUENCE [LARGE SCALE MRNA] (ISOFORMS 1 AND 4)</scope>
    <source>
        <tissue>Brain</tissue>
        <tissue>Kidney</tissue>
        <tissue>Uterus</tissue>
    </source>
</reference>
<reference key="8">
    <citation type="submission" date="2009-03" db="UniProtKB">
        <authorList>
            <person name="Bienvenut W.V."/>
            <person name="Waridel P."/>
            <person name="Quadroni M."/>
        </authorList>
    </citation>
    <scope>PROTEIN SEQUENCE OF 60-75; 87-100; 184-199; 239-257 AND 284-293</scope>
    <scope>PHOSPHORYLATION AT SER-241</scope>
    <scope>IDENTIFICATION BY MASS SPECTROMETRY</scope>
    <source>
        <tissue>Embryonic kidney</tissue>
    </source>
</reference>
<reference key="9">
    <citation type="journal article" date="1998" name="Curr. Biol.">
        <title>Translocation of PDK-1 to the plasma membrane is important in allowing PDK-1 to activate protein kinase B.</title>
        <authorList>
            <person name="Anderson K.E."/>
            <person name="Coadwell W.J."/>
            <person name="Stephens L.R."/>
            <person name="Hawkins P.T."/>
        </authorList>
    </citation>
    <scope>MUTAGENESIS OF ARG-474</scope>
    <scope>ALTERNATIVE SPLICING</scope>
</reference>
<reference key="10">
    <citation type="journal article" date="1998" name="Curr. Biol.">
        <title>Regulation of protein kinase C zeta by PI 3-kinase and PDK-1.</title>
        <authorList>
            <person name="Chou M.M."/>
            <person name="Hou W."/>
            <person name="Johnson J."/>
            <person name="Graham L.K."/>
            <person name="Lee M.H."/>
            <person name="Chen C.S."/>
            <person name="Newton A.C."/>
            <person name="Schaffhausen B.S."/>
            <person name="Toker A."/>
        </authorList>
    </citation>
    <scope>FUNCTION IN PHOSPHORYLATION OF PRKCZ</scope>
</reference>
<reference key="11">
    <citation type="journal article" date="1998" name="Proc. Natl. Acad. Sci. U.S.A.">
        <title>Phosphorylation and activation of cAMP-dependent protein kinase by phosphoinositide-dependent protein kinase.</title>
        <authorList>
            <person name="Cheng X."/>
            <person name="Ma Y."/>
            <person name="Moore M."/>
            <person name="Hemmings B.A."/>
            <person name="Taylor S.S."/>
        </authorList>
    </citation>
    <scope>FUNCTION IN PHOSPHORYLATION OF PRKACA</scope>
</reference>
<reference key="12">
    <citation type="journal article" date="1998" name="Science">
        <title>Phosphorylation and activation of p70s6k by PDK1.</title>
        <authorList>
            <person name="Pullen N."/>
            <person name="Dennis P.B."/>
            <person name="Andjelkovic M."/>
            <person name="Dufner A."/>
            <person name="Kozma S.C."/>
            <person name="Hemmings B.A."/>
            <person name="Thomas G."/>
        </authorList>
    </citation>
    <scope>FUNCTION IN PHOSPHORYLATION OF RPS6KB1</scope>
</reference>
<reference key="13">
    <citation type="journal article" date="1999" name="Biochem. J.">
        <title>Phosphorylation of Ser-241 is essential for the activity of 3-phosphoinositide-dependent protein kinase-1: identification of five sites of phosphorylation in vivo.</title>
        <authorList>
            <person name="Casamayor A."/>
            <person name="Morrice N.A."/>
            <person name="Alessi D.R."/>
        </authorList>
    </citation>
    <scope>PHOSPHORYLATION AT SER-25; SER-241; SER-393; SER-396 AND SER-410</scope>
    <scope>MUTAGENESIS OF SER-25; SER-241; SER-393; SER-396 AND SER-410</scope>
</reference>
<reference key="14">
    <citation type="journal article" date="1999" name="Genes Dev.">
        <title>A PDK1 homolog is necessary and sufficient to transduce AGE-1 PI3 kinase signals that regulate diapause in Caenorhabditis elegans.</title>
        <authorList>
            <person name="Paradis S."/>
            <person name="Ailion M."/>
            <person name="Toker A."/>
            <person name="Thomas J.H."/>
            <person name="Ruvkun G."/>
        </authorList>
    </citation>
    <scope>MUTAGENESIS OF ALA-277</scope>
</reference>
<reference key="15">
    <citation type="journal article" date="1999" name="J. Biol. Chem.">
        <title>90-kDa ribosomal S6 kinase is phosphorylated and activated by 3-phosphoinositide-dependent protein kinase-1.</title>
        <authorList>
            <person name="Jensen C.J."/>
            <person name="Buch M.-B."/>
            <person name="Krag T.O."/>
            <person name="Hemmings B.A."/>
            <person name="Gammeltoft S."/>
            <person name="Froedin M."/>
        </authorList>
    </citation>
    <scope>FUNCTION IN PHOSPHORYLATION OF RPS6KA3</scope>
</reference>
<reference key="16">
    <citation type="journal article" date="2000" name="J. Biol. Chem.">
        <title>p21-activated kinase (PAK1) is phosphorylated and activated by 3-phosphoinositide-dependent kinase-1 (PDK1).</title>
        <authorList>
            <person name="King C.C."/>
            <person name="Gardiner E.M."/>
            <person name="Zenke F.T."/>
            <person name="Bohl B.P."/>
            <person name="Newton A.C."/>
            <person name="Hemmings B.A."/>
            <person name="Bokoch G.M."/>
        </authorList>
    </citation>
    <scope>FUNCTION IN PHOSPHORYLATION OF PAK1</scope>
    <scope>INTERACTION WITH PAK1</scope>
</reference>
<reference key="17">
    <citation type="journal article" date="2001" name="J. Biol. Chem.">
        <title>Identification of tyrosine phosphorylation sites on 3-phosphoinositide-dependent protein kinase-1 (PDK1) and their role in regulating kinase activity.</title>
        <authorList>
            <person name="Park J."/>
            <person name="Hill M.M."/>
            <person name="Hess D."/>
            <person name="Brazil D.P."/>
            <person name="Hofsteenge J."/>
            <person name="Hemmings B.A."/>
        </authorList>
    </citation>
    <scope>PHOSPHORYLATION AT TYR-9; SER-241; TYR-373 AND TYR-376</scope>
    <scope>MUTAGENESIS OF TYR-9; TYR-373 AND TYR-376</scope>
</reference>
<reference key="18">
    <citation type="journal article" date="2002" name="J. Biol. Chem.">
        <title>Regulation of kinase activity of 3-phosphoinositide-dependent protein kinase-1 by binding to 14-3-3.</title>
        <authorList>
            <person name="Sato S."/>
            <person name="Fujita N."/>
            <person name="Tsuruo T."/>
        </authorList>
    </citation>
    <scope>ACTIVITY REGULATION</scope>
    <scope>INTERACTION WITH YWHAH AND YWHAQ</scope>
</reference>
<reference key="19">
    <citation type="journal article" date="2002" name="Mol. Cell. Biol.">
        <title>Multiple phosphoinositide 3-kinase-dependent steps in activation of protein kinase B.</title>
        <authorList>
            <person name="Scheid M.P."/>
            <person name="Marignani P.A."/>
            <person name="Woodgett J.R."/>
        </authorList>
    </citation>
    <scope>FUNCTION IN PHOSPHORYLATION OF PKB/AKT1</scope>
</reference>
<reference key="20">
    <citation type="journal article" date="2003" name="Mol. Cell. Biol.">
        <title>Pyk2- and Src-dependent tyrosine phosphorylation of PDK1 regulates focal adhesions.</title>
        <authorList>
            <person name="Taniyama Y."/>
            <person name="Weber D.S."/>
            <person name="Rocic P."/>
            <person name="Hilenski L."/>
            <person name="Akers M.L."/>
            <person name="Park J."/>
            <person name="Hemmings B.A."/>
            <person name="Alexander R.W."/>
            <person name="Griendling K.K."/>
        </authorList>
    </citation>
    <scope>FUNCTION</scope>
    <scope>PHOSPHORYLATION AT TYR-9; TYR-373 AND TYR-376 BY SRC</scope>
    <scope>INTERACTION WITH PTK2B</scope>
    <scope>SUBCELLULAR LOCATION</scope>
</reference>
<reference key="21">
    <citation type="journal article" date="2004" name="J. Biol. Chem.">
        <title>Peroxisomal targeting as a tool for assaying protein-protein interactions in the living cell: cytokine-independent survival kinase (CISK) binds PDK-1 in vivo in a phosphorylation-dependent manner.</title>
        <authorList>
            <person name="Nilsen T."/>
            <person name="Slagsvold T."/>
            <person name="Skjerpen C.S."/>
            <person name="Brech A."/>
            <person name="Stenmark H."/>
            <person name="Olsnes S."/>
        </authorList>
    </citation>
    <scope>FUNCTION IN PHOSPHORYLATION OF SGK3</scope>
    <scope>INTERACTION WITH SGK3</scope>
</reference>
<reference key="22">
    <citation type="journal article" date="2004" name="J. Biol. Chem.">
        <title>The adaptor protein Grb14 regulates the localization of 3-phosphoinositide-dependent kinase-1.</title>
        <authorList>
            <person name="King C.C."/>
            <person name="Newton A.C."/>
        </authorList>
    </citation>
    <scope>SUBCELLULAR LOCATION</scope>
    <scope>INTERACTION WITH GRB14</scope>
</reference>
<reference key="23">
    <citation type="journal article" date="1999" name="Curr. Biol.">
        <title>PDK1 acquires PDK2 activity in the presence of a synthetic peptide derived from the carboxyl terminus of PRK2.</title>
        <authorList>
            <person name="Balendran A."/>
            <person name="Casamayor A."/>
            <person name="Deak M."/>
            <person name="Paterson A."/>
            <person name="Gaffney P."/>
            <person name="Currie R."/>
            <person name="Downes C.P."/>
            <person name="Alessi D.R."/>
        </authorList>
    </citation>
    <scope>FUNCTION IN PHOSPHORYLATION OF AKT1</scope>
    <scope>INTERACTION WITH PKN2</scope>
</reference>
<reference key="24">
    <citation type="journal article" date="2004" name="Semin. Cell Dev. Biol.">
        <title>PDK1, the master regulator of AGC kinase signal transduction.</title>
        <authorList>
            <person name="Mora A."/>
            <person name="Komander D."/>
            <person name="van Aalten D.M."/>
            <person name="Alessi D.R."/>
        </authorList>
    </citation>
    <scope>REVIEW ON FUNCTION</scope>
</reference>
<reference key="25">
    <citation type="journal article" date="2005" name="J. Biol. Chem.">
        <title>3-Phosphoinositide-dependent protein kinase-1-mediated IkappaB kinase beta (IkkB) phosphorylation activates NF-kappaB signaling.</title>
        <authorList>
            <person name="Tanaka H."/>
            <person name="Fujita N."/>
            <person name="Tsuruo T."/>
        </authorList>
    </citation>
    <scope>FUNCTION IN PHOSPHORYLATION OF IKKB</scope>
    <scope>INTERACTION WITH IKKB</scope>
</reference>
<reference key="26">
    <citation type="journal article" date="2005" name="J. Biol. Chem.">
        <title>Regulation of transforming growth factor-beta signaling and PDK1 kinase activity by physical interaction between PDK1 and serine-threonine kinase receptor-associated protein.</title>
        <authorList>
            <person name="Seong H.A."/>
            <person name="Jung H."/>
            <person name="Choi H.S."/>
            <person name="Kim K.T."/>
            <person name="Ha H."/>
        </authorList>
    </citation>
    <scope>FUNCTION</scope>
    <scope>ACTIVITY REGULATION</scope>
    <scope>INTERACTION WITH STRAP</scope>
</reference>
<reference key="27">
    <citation type="journal article" date="2005" name="Mol. Cell. Biol.">
        <title>Phosphoinositide-dependent phosphorylation of PDK1 regulates nuclear translocation.</title>
        <authorList>
            <person name="Scheid M.P."/>
            <person name="Parsons M."/>
            <person name="Woodgett J.R."/>
        </authorList>
    </citation>
    <scope>PHOSPHORYLATION AT SER-396</scope>
    <scope>SUBCELLULAR LOCATION</scope>
</reference>
<reference key="28">
    <citation type="journal article" date="2005" name="Mol. Cell. Biol.">
        <title>Tyrosine phosphorylation of phosphoinositide-dependent kinase 1 by the insulin receptor is necessary for insulin metabolic signaling.</title>
        <authorList>
            <person name="Fiory F."/>
            <person name="Alberobello A.T."/>
            <person name="Miele C."/>
            <person name="Oriente F."/>
            <person name="Esposito I."/>
            <person name="Corbo V."/>
            <person name="Ruvo M."/>
            <person name="Tizzano B."/>
            <person name="Rasmussen T.E."/>
            <person name="Gammeltoft S."/>
            <person name="Formisano P."/>
            <person name="Beguinot F."/>
        </authorList>
    </citation>
    <scope>PHOSPHORYLATION AT TYR-9; TYR-373 AND TYR-376 BY INSR</scope>
    <scope>INTERACTION WITH INSR</scope>
</reference>
<reference key="29">
    <citation type="journal article" date="2006" name="Bioorg. Chem.">
        <title>Role of the PH domain in regulating in vitro autophosphorylation events required for reconstitution of PDK1 catalytic activity.</title>
        <authorList>
            <person name="Gao X."/>
            <person name="Harris T.K."/>
        </authorList>
    </citation>
    <scope>PHOSPHORYLATION AT SER-241 AND THR-513</scope>
</reference>
<reference key="30">
    <citation type="journal article" date="2007" name="J. Biol. Chem.">
        <title>3-Phosphoinositide-dependent PDK1 negatively regulates transforming growth factor-beta-induced signaling in a kinase-dependent manner through physical interaction with Smad proteins.</title>
        <authorList>
            <person name="Seong H.A."/>
            <person name="Jung H."/>
            <person name="Kim K.T."/>
            <person name="Ha H."/>
        </authorList>
    </citation>
    <scope>FUNCTION</scope>
    <scope>INTERACTION WITH SMAD2; SMAD3; SMAD4 AND SMAD7</scope>
</reference>
<reference key="31">
    <citation type="journal article" date="2007" name="J. Cell Biol.">
        <title>Essential role of PDK1 in regulating endothelial cell migration.</title>
        <authorList>
            <person name="Primo L."/>
            <person name="di Blasio L."/>
            <person name="Roca C."/>
            <person name="Droetto S."/>
            <person name="Piva R."/>
            <person name="Schaffhausen B."/>
            <person name="Bussolino F."/>
        </authorList>
    </citation>
    <scope>FUNCTION</scope>
    <scope>SUBCELLULAR LOCATION</scope>
</reference>
<reference key="32">
    <citation type="journal article" date="2008" name="Arch. Biochem. Biophys.">
        <title>The C-terminus of PRK2/PKNgamma is required for optimal activation by RhoA in a GTP-dependent manner.</title>
        <authorList>
            <person name="Lim W.G."/>
            <person name="Chen X."/>
            <person name="Liu J.P."/>
            <person name="Tan B.J."/>
            <person name="Zhou S."/>
            <person name="Smith A."/>
            <person name="Lees N."/>
            <person name="Hou L."/>
            <person name="Gu F."/>
            <person name="Yu X.Y."/>
            <person name="Du Y."/>
            <person name="Smith D."/>
            <person name="Verma C."/>
            <person name="Liu K."/>
            <person name="Duan W."/>
        </authorList>
    </citation>
    <scope>FUNCTION IN PHOSPHORYLATION OF PKN2</scope>
</reference>
<reference key="33">
    <citation type="journal article" date="2008" name="Cancer Sci.">
        <title>TUSC4/NPRL2, a novel PDK1-interacting protein, inhibits PDK1 tyrosine phosphorylation and its downstream signaling.</title>
        <authorList>
            <person name="Kurata A."/>
            <person name="Katayama R."/>
            <person name="Watanabe T."/>
            <person name="Tsuruo T."/>
            <person name="Fujita N."/>
        </authorList>
    </citation>
    <scope>INTERACTION WITH NPRL2</scope>
    <scope>ACTIVITY REGULATION</scope>
</reference>
<reference key="34">
    <citation type="journal article" date="2008" name="Cell Cycle">
        <title>Dissecting the role of the 3-phosphoinositide-dependent protein kinase-1 (PDK1) signalling pathways.</title>
        <authorList>
            <person name="Bayascas J.R."/>
        </authorList>
    </citation>
    <scope>REVIEW ON FUNCTION</scope>
</reference>
<reference key="35">
    <citation type="journal article" date="2008" name="J. Biol. Chem.">
        <title>Regulation of 3-phosphoinositide-dependent protein kinase-1 (PDK1) by Src involves tyrosine phosphorylation of PDK1 and Src homology 2 domain binding.</title>
        <authorList>
            <person name="Yang K.J."/>
            <person name="Shin S."/>
            <person name="Piao L."/>
            <person name="Shin E."/>
            <person name="Li Y."/>
            <person name="Park K.A."/>
            <person name="Byun H.S."/>
            <person name="Won M."/>
            <person name="Hong J."/>
            <person name="Kweon G.R."/>
            <person name="Hur G.M."/>
            <person name="Seok J.H."/>
            <person name="Chun T."/>
            <person name="Brazil D.P."/>
            <person name="Hemmings B.A."/>
            <person name="Park J."/>
        </authorList>
    </citation>
    <scope>INTERACTION WITH SRC; RASA1 AND CRK</scope>
    <scope>SUBCELLULAR LOCATION</scope>
    <scope>TISSUE SPECIFICITY</scope>
</reference>
<reference key="36">
    <citation type="journal article" date="2009" name="Cell. Signal.">
        <title>The nuclear localization of 3'-phosphoinositide-dependent kinase-1 is dependent on its association with the protein tyrosine phosphatase SHP-1.</title>
        <authorList>
            <person name="Sephton C.F."/>
            <person name="Zhang D."/>
            <person name="Lehmann T.M."/>
            <person name="Pennington P.R."/>
            <person name="Scheid M.P."/>
            <person name="Mousseau D.D."/>
        </authorList>
    </citation>
    <scope>SUBCELLULAR LOCATION</scope>
    <scope>INTERACTION WITH PTPN6</scope>
</reference>
<reference key="37">
    <citation type="journal article" date="2009" name="NeuroReport">
        <title>IGF-I regulated phosphorylation and translocation of PDK-1 in neurons.</title>
        <authorList>
            <person name="Alajajian B.B."/>
            <person name="Fletcher L."/>
            <person name="Isgor E."/>
            <person name="Jimenez D.F."/>
            <person name="Digicaylioglu M."/>
        </authorList>
    </citation>
    <scope>SUBCELLULAR LOCATION</scope>
</reference>
<reference key="38">
    <citation type="journal article" date="2009" name="Sci. Signal.">
        <title>Quantitative phosphoproteomic analysis of T cell receptor signaling reveals system-wide modulation of protein-protein interactions.</title>
        <authorList>
            <person name="Mayya V."/>
            <person name="Lundgren D.H."/>
            <person name="Hwang S.-I."/>
            <person name="Rezaul K."/>
            <person name="Wu L."/>
            <person name="Eng J.K."/>
            <person name="Rodionov V."/>
            <person name="Han D.K."/>
        </authorList>
    </citation>
    <scope>IDENTIFICATION BY MASS SPECTROMETRY [LARGE SCALE ANALYSIS]</scope>
    <source>
        <tissue>Leukemic T-cell</tissue>
    </source>
</reference>
<reference key="39">
    <citation type="journal article" date="2012" name="J. Biol. Chem.">
        <title>PDK1 phosphorylation at Thr354 by murine protein serine/threonine kinase 38 contributes to the negative regulation of PDK1 activity.</title>
        <authorList>
            <person name="Seong H.A."/>
            <person name="Jung H."/>
            <person name="Manoharan R."/>
            <person name="Ha H."/>
        </authorList>
    </citation>
    <scope>PHOSPHORYLATION AT THR-354 BY MELK</scope>
    <scope>PHOSPHORYLATION AT SER-394 AND SER-398 BY MAP3K5</scope>
    <scope>MUTAGENESIS OF THR-354; SER-394 AND SER-398</scope>
</reference>
<reference key="40">
    <citation type="journal article" date="2012" name="PLoS ONE">
        <title>Ubiquitin-specific protease 4 inhibits mono-ubiquitination of the master growth factor signaling kinase PDK1.</title>
        <authorList>
            <person name="Uras I.Z."/>
            <person name="List T."/>
            <person name="Nijman S.M."/>
        </authorList>
    </citation>
    <scope>UBIQUITINATION</scope>
    <scope>DEUBIQUITINATION BY USP4</scope>
</reference>
<reference key="41">
    <citation type="journal article" date="2014" name="J. Proteomics">
        <title>An enzyme assisted RP-RPLC approach for in-depth analysis of human liver phosphoproteome.</title>
        <authorList>
            <person name="Bian Y."/>
            <person name="Song C."/>
            <person name="Cheng K."/>
            <person name="Dong M."/>
            <person name="Wang F."/>
            <person name="Huang J."/>
            <person name="Sun D."/>
            <person name="Wang L."/>
            <person name="Ye M."/>
            <person name="Zou H."/>
        </authorList>
    </citation>
    <scope>IDENTIFICATION BY MASS SPECTROMETRY [LARGE SCALE ANALYSIS]</scope>
    <source>
        <tissue>Liver</tissue>
    </source>
</reference>
<reference key="42">
    <citation type="journal article" date="2002" name="EMBO J.">
        <title>High resolution crystal structure of the human PDK1 catalytic domain defines the regulatory phosphopeptide docking site.</title>
        <authorList>
            <person name="Biondi R.M."/>
            <person name="Komander D."/>
            <person name="Thomas C.C."/>
            <person name="Lizcano J.M."/>
            <person name="Deak M."/>
            <person name="Alessi D.R."/>
            <person name="van Aalten D.M."/>
        </authorList>
    </citation>
    <scope>X-RAY CRYSTALLOGRAPHY (2.00 ANGSTROMS) OF 71-359 IN COMPLEX WITH ATP</scope>
</reference>
<reference key="43">
    <citation type="journal article" date="2005" name="J. Biol. Chem.">
        <title>Role of T-loop phosphorylation in PDK1 activation, stability, and substrate binding.</title>
        <authorList>
            <person name="Komander D."/>
            <person name="Kular G."/>
            <person name="Deak M."/>
            <person name="Alessi D.R."/>
            <person name="van Aalten D.M."/>
        </authorList>
    </citation>
    <scope>X-RAY CRYSTALLOGRAPHY (1.95 ANGSTROMS) OF 51-360 IN COMPLEX WITH ATP</scope>
</reference>
<reference key="44">
    <citation type="journal article" date="2005" name="J. Biol. Chem.">
        <title>Novel small molecule inhibitors of 3-phosphoinositide-dependent kinase-1.</title>
        <authorList>
            <person name="Feldman R.I."/>
            <person name="Wu J.M."/>
            <person name="Polokoff M.A."/>
            <person name="Kochanny M.J."/>
            <person name="Dinter H."/>
            <person name="Zhu D."/>
            <person name="Biroc S.L."/>
            <person name="Alicke B."/>
            <person name="Bryant J."/>
            <person name="Yuan S."/>
            <person name="Buckman B.O."/>
            <person name="Lentz D."/>
            <person name="Ferrer M."/>
            <person name="Whitlow M."/>
            <person name="Adler M."/>
            <person name="Finster S."/>
            <person name="Chang Z."/>
            <person name="Arnaiz D.O."/>
        </authorList>
    </citation>
    <scope>X-RAY CRYSTALLOGRAPHY (2.17 ANGSTROMS) OF 74-359</scope>
    <scope>PHOSPHORYLATION AT SER-241</scope>
</reference>
<reference key="45">
    <citation type="journal article" date="2010" name="Sci. Signal.">
        <title>Regulation of 3-phosphoinositide-dependent protein kinase 1 activity by homodimerization in live cells.</title>
        <authorList>
            <person name="Masters T.A."/>
            <person name="Calleja V."/>
            <person name="Armoogum D.A."/>
            <person name="Marsh R.J."/>
            <person name="Applebee C.J."/>
            <person name="Laguerre M."/>
            <person name="Bain A.J."/>
            <person name="Larijani B."/>
        </authorList>
    </citation>
    <scope>X-RAY CRYSTALLOGRAPHY (1.45 ANGSTROMS) OF 409-556</scope>
    <scope>SUBUNIT</scope>
    <scope>ACTIVITY REGULATION</scope>
    <scope>MUTAGENESIS OF THR-513</scope>
</reference>
<reference key="46">
    <citation type="journal article" date="2012" name="Chem. Biol.">
        <title>Substrate-selective inhibition of protein kinase PDK1 by small compounds that bind to the PIF-pocket allosteric docking site.</title>
        <authorList>
            <person name="Busschots K."/>
            <person name="Lopez-Garcia L.A."/>
            <person name="Lammi C."/>
            <person name="Stroba A."/>
            <person name="Zeuzem S."/>
            <person name="Piiper A."/>
            <person name="Alzari P.M."/>
            <person name="Neimanis S."/>
            <person name="Arencibia J.M."/>
            <person name="Engel M."/>
            <person name="Schulze J.O."/>
            <person name="Biondi R.M."/>
        </authorList>
    </citation>
    <scope>X-RAY CRYSTALLOGRAPHY (1.43 ANGSTROMS) OF 51-359 IN COMPLEX WITH ATP</scope>
    <scope>DOMAIN</scope>
</reference>
<keyword id="KW-0002">3D-structure</keyword>
<keyword id="KW-0007">Acetylation</keyword>
<keyword id="KW-0010">Activator</keyword>
<keyword id="KW-0025">Alternative splicing</keyword>
<keyword id="KW-0067">ATP-binding</keyword>
<keyword id="KW-0965">Cell junction</keyword>
<keyword id="KW-1003">Cell membrane</keyword>
<keyword id="KW-0963">Cytoplasm</keyword>
<keyword id="KW-0903">Direct protein sequencing</keyword>
<keyword id="KW-0418">Kinase</keyword>
<keyword id="KW-0472">Membrane</keyword>
<keyword id="KW-0547">Nucleotide-binding</keyword>
<keyword id="KW-0539">Nucleus</keyword>
<keyword id="KW-0597">Phosphoprotein</keyword>
<keyword id="KW-1267">Proteomics identification</keyword>
<keyword id="KW-1185">Reference proteome</keyword>
<keyword id="KW-0723">Serine/threonine-protein kinase</keyword>
<keyword id="KW-0804">Transcription</keyword>
<keyword id="KW-0805">Transcription regulation</keyword>
<keyword id="KW-0808">Transferase</keyword>
<keyword id="KW-0832">Ubl conjugation</keyword>
<dbReference type="EC" id="2.7.11.1" evidence="35"/>
<dbReference type="EMBL" id="AF017995">
    <property type="protein sequence ID" value="AAC51825.1"/>
    <property type="molecule type" value="mRNA"/>
</dbReference>
<dbReference type="EMBL" id="Y15056">
    <property type="protein sequence ID" value="CAA75341.1"/>
    <property type="molecule type" value="mRNA"/>
</dbReference>
<dbReference type="EMBL" id="CR536517">
    <property type="protein sequence ID" value="CAG38755.1"/>
    <property type="molecule type" value="mRNA"/>
</dbReference>
<dbReference type="EMBL" id="AB209835">
    <property type="protein sequence ID" value="BAD93072.1"/>
    <property type="status" value="ALT_INIT"/>
    <property type="molecule type" value="mRNA"/>
</dbReference>
<dbReference type="EMBL" id="AC093525">
    <property type="status" value="NOT_ANNOTATED_CDS"/>
    <property type="molecule type" value="Genomic_DNA"/>
</dbReference>
<dbReference type="EMBL" id="AC141586">
    <property type="status" value="NOT_ANNOTATED_CDS"/>
    <property type="molecule type" value="Genomic_DNA"/>
</dbReference>
<dbReference type="EMBL" id="BC006339">
    <property type="protein sequence ID" value="AAH06339.2"/>
    <property type="molecule type" value="mRNA"/>
</dbReference>
<dbReference type="EMBL" id="BC012103">
    <property type="protein sequence ID" value="AAH12103.1"/>
    <property type="molecule type" value="mRNA"/>
</dbReference>
<dbReference type="EMBL" id="BC033494">
    <property type="protein sequence ID" value="AAH33494.1"/>
    <property type="molecule type" value="mRNA"/>
</dbReference>
<dbReference type="CCDS" id="CCDS10472.1">
    <molecule id="O15530-1"/>
</dbReference>
<dbReference type="CCDS" id="CCDS10473.1">
    <molecule id="O15530-4"/>
</dbReference>
<dbReference type="CCDS" id="CCDS58411.1">
    <molecule id="O15530-5"/>
</dbReference>
<dbReference type="RefSeq" id="NP_001248745.1">
    <molecule id="O15530-5"/>
    <property type="nucleotide sequence ID" value="NM_001261816.2"/>
</dbReference>
<dbReference type="RefSeq" id="NP_002604.1">
    <molecule id="O15530-1"/>
    <property type="nucleotide sequence ID" value="NM_002613.5"/>
</dbReference>
<dbReference type="RefSeq" id="NP_112558.2">
    <molecule id="O15530-4"/>
    <property type="nucleotide sequence ID" value="NM_031268.5"/>
</dbReference>
<dbReference type="PDB" id="1H1W">
    <property type="method" value="X-ray"/>
    <property type="resolution" value="2.00 A"/>
    <property type="chains" value="A=71-359"/>
</dbReference>
<dbReference type="PDB" id="1OKY">
    <property type="method" value="X-ray"/>
    <property type="resolution" value="2.30 A"/>
    <property type="chains" value="A=51-360"/>
</dbReference>
<dbReference type="PDB" id="1OKZ">
    <property type="method" value="X-ray"/>
    <property type="resolution" value="2.51 A"/>
    <property type="chains" value="A=51-360"/>
</dbReference>
<dbReference type="PDB" id="1UU3">
    <property type="method" value="X-ray"/>
    <property type="resolution" value="1.70 A"/>
    <property type="chains" value="A=51-360"/>
</dbReference>
<dbReference type="PDB" id="1UU7">
    <property type="method" value="X-ray"/>
    <property type="resolution" value="1.90 A"/>
    <property type="chains" value="A=51-360"/>
</dbReference>
<dbReference type="PDB" id="1UU8">
    <property type="method" value="X-ray"/>
    <property type="resolution" value="2.50 A"/>
    <property type="chains" value="A=51-360"/>
</dbReference>
<dbReference type="PDB" id="1UU9">
    <property type="method" value="X-ray"/>
    <property type="resolution" value="1.95 A"/>
    <property type="chains" value="A=72-357"/>
</dbReference>
<dbReference type="PDB" id="1UVR">
    <property type="method" value="X-ray"/>
    <property type="resolution" value="2.81 A"/>
    <property type="chains" value="A=71-359"/>
</dbReference>
<dbReference type="PDB" id="1W1D">
    <property type="method" value="X-ray"/>
    <property type="resolution" value="1.50 A"/>
    <property type="chains" value="A=409-556"/>
</dbReference>
<dbReference type="PDB" id="1W1G">
    <property type="method" value="X-ray"/>
    <property type="resolution" value="1.45 A"/>
    <property type="chains" value="A=409-556"/>
</dbReference>
<dbReference type="PDB" id="1W1H">
    <property type="method" value="X-ray"/>
    <property type="resolution" value="1.45 A"/>
    <property type="chains" value="A/B/C/D=409-556"/>
</dbReference>
<dbReference type="PDB" id="1Z5M">
    <property type="method" value="X-ray"/>
    <property type="resolution" value="2.17 A"/>
    <property type="chains" value="A=74-359"/>
</dbReference>
<dbReference type="PDB" id="2BIY">
    <property type="method" value="X-ray"/>
    <property type="resolution" value="1.95 A"/>
    <property type="chains" value="A=51-360"/>
</dbReference>
<dbReference type="PDB" id="2PE0">
    <property type="method" value="X-ray"/>
    <property type="resolution" value="2.35 A"/>
    <property type="chains" value="A=74-359"/>
</dbReference>
<dbReference type="PDB" id="2PE1">
    <property type="method" value="X-ray"/>
    <property type="resolution" value="2.14 A"/>
    <property type="chains" value="A=74-359"/>
</dbReference>
<dbReference type="PDB" id="2PE2">
    <property type="method" value="X-ray"/>
    <property type="resolution" value="2.13 A"/>
    <property type="chains" value="A=74-359"/>
</dbReference>
<dbReference type="PDB" id="2R7B">
    <property type="method" value="X-ray"/>
    <property type="resolution" value="2.70 A"/>
    <property type="chains" value="A=48-359"/>
</dbReference>
<dbReference type="PDB" id="2VKI">
    <property type="method" value="X-ray"/>
    <property type="resolution" value="1.80 A"/>
    <property type="chains" value="A=409-556"/>
</dbReference>
<dbReference type="PDB" id="2XCH">
    <property type="method" value="X-ray"/>
    <property type="resolution" value="2.00 A"/>
    <property type="chains" value="A=51-359"/>
</dbReference>
<dbReference type="PDB" id="2XCK">
    <property type="method" value="X-ray"/>
    <property type="resolution" value="2.30 A"/>
    <property type="chains" value="A=51-359"/>
</dbReference>
<dbReference type="PDB" id="3H9O">
    <property type="method" value="X-ray"/>
    <property type="resolution" value="2.30 A"/>
    <property type="chains" value="A=51-359"/>
</dbReference>
<dbReference type="PDB" id="3HRC">
    <property type="method" value="X-ray"/>
    <property type="resolution" value="1.91 A"/>
    <property type="chains" value="A=50-359"/>
</dbReference>
<dbReference type="PDB" id="3HRF">
    <property type="method" value="X-ray"/>
    <property type="resolution" value="1.90 A"/>
    <property type="chains" value="A=50-359"/>
</dbReference>
<dbReference type="PDB" id="3ION">
    <property type="method" value="X-ray"/>
    <property type="resolution" value="2.40 A"/>
    <property type="chains" value="A=48-359"/>
</dbReference>
<dbReference type="PDB" id="3IOP">
    <property type="method" value="X-ray"/>
    <property type="resolution" value="2.20 A"/>
    <property type="chains" value="A=48-359"/>
</dbReference>
<dbReference type="PDB" id="3NAX">
    <property type="method" value="X-ray"/>
    <property type="resolution" value="1.75 A"/>
    <property type="chains" value="A=66-362"/>
</dbReference>
<dbReference type="PDB" id="3NAY">
    <property type="method" value="X-ray"/>
    <property type="resolution" value="2.60 A"/>
    <property type="chains" value="A/B=66-362"/>
</dbReference>
<dbReference type="PDB" id="3NUN">
    <property type="method" value="X-ray"/>
    <property type="resolution" value="2.20 A"/>
    <property type="chains" value="A=67-358"/>
</dbReference>
<dbReference type="PDB" id="3NUS">
    <property type="method" value="X-ray"/>
    <property type="resolution" value="2.75 A"/>
    <property type="chains" value="A=73-358"/>
</dbReference>
<dbReference type="PDB" id="3NUU">
    <property type="method" value="X-ray"/>
    <property type="resolution" value="1.98 A"/>
    <property type="chains" value="A=73-358"/>
</dbReference>
<dbReference type="PDB" id="3NUY">
    <property type="method" value="X-ray"/>
    <property type="resolution" value="2.10 A"/>
    <property type="chains" value="A=73-358"/>
</dbReference>
<dbReference type="PDB" id="3ORX">
    <property type="method" value="X-ray"/>
    <property type="resolution" value="2.20 A"/>
    <property type="chains" value="A/B/C/D/E/F/G/H=51-359"/>
</dbReference>
<dbReference type="PDB" id="3ORZ">
    <property type="method" value="X-ray"/>
    <property type="resolution" value="2.00 A"/>
    <property type="chains" value="A/B/C/D=51-359"/>
</dbReference>
<dbReference type="PDB" id="3OTU">
    <property type="method" value="X-ray"/>
    <property type="resolution" value="2.10 A"/>
    <property type="chains" value="A=51-359"/>
</dbReference>
<dbReference type="PDB" id="3PWY">
    <property type="method" value="X-ray"/>
    <property type="resolution" value="3.50 A"/>
    <property type="chains" value="A=51-359"/>
</dbReference>
<dbReference type="PDB" id="3QC4">
    <property type="method" value="X-ray"/>
    <property type="resolution" value="1.80 A"/>
    <property type="chains" value="A/B=51-359"/>
</dbReference>
<dbReference type="PDB" id="3QCQ">
    <property type="method" value="X-ray"/>
    <property type="resolution" value="2.50 A"/>
    <property type="chains" value="A=48-359"/>
</dbReference>
<dbReference type="PDB" id="3QCS">
    <property type="method" value="X-ray"/>
    <property type="resolution" value="2.49 A"/>
    <property type="chains" value="A=48-359"/>
</dbReference>
<dbReference type="PDB" id="3QCX">
    <property type="method" value="X-ray"/>
    <property type="resolution" value="2.30 A"/>
    <property type="chains" value="A=48-359"/>
</dbReference>
<dbReference type="PDB" id="3QCY">
    <property type="method" value="X-ray"/>
    <property type="resolution" value="2.20 A"/>
    <property type="chains" value="A=48-359"/>
</dbReference>
<dbReference type="PDB" id="3QD0">
    <property type="method" value="X-ray"/>
    <property type="resolution" value="1.99 A"/>
    <property type="chains" value="A=48-359"/>
</dbReference>
<dbReference type="PDB" id="3QD3">
    <property type="method" value="X-ray"/>
    <property type="resolution" value="2.00 A"/>
    <property type="chains" value="A=48-359"/>
</dbReference>
<dbReference type="PDB" id="3QD4">
    <property type="method" value="X-ray"/>
    <property type="resolution" value="2.30 A"/>
    <property type="chains" value="A=48-359"/>
</dbReference>
<dbReference type="PDB" id="3RCJ">
    <property type="method" value="X-ray"/>
    <property type="resolution" value="1.70 A"/>
    <property type="chains" value="A=50-359"/>
</dbReference>
<dbReference type="PDB" id="3RWP">
    <property type="method" value="X-ray"/>
    <property type="resolution" value="1.92 A"/>
    <property type="chains" value="A=51-359"/>
</dbReference>
<dbReference type="PDB" id="3RWQ">
    <property type="method" value="X-ray"/>
    <property type="resolution" value="2.55 A"/>
    <property type="chains" value="A=51-359"/>
</dbReference>
<dbReference type="PDB" id="3SC1">
    <property type="method" value="X-ray"/>
    <property type="resolution" value="2.70 A"/>
    <property type="chains" value="A=50-359"/>
</dbReference>
<dbReference type="PDB" id="4A06">
    <property type="method" value="X-ray"/>
    <property type="resolution" value="2.00 A"/>
    <property type="chains" value="A=50-359"/>
</dbReference>
<dbReference type="PDB" id="4A07">
    <property type="method" value="X-ray"/>
    <property type="resolution" value="1.85 A"/>
    <property type="chains" value="A=50-359"/>
</dbReference>
<dbReference type="PDB" id="4AW0">
    <property type="method" value="X-ray"/>
    <property type="resolution" value="1.43 A"/>
    <property type="chains" value="A=51-359"/>
</dbReference>
<dbReference type="PDB" id="4AW1">
    <property type="method" value="X-ray"/>
    <property type="resolution" value="1.68 A"/>
    <property type="chains" value="A=51-359"/>
</dbReference>
<dbReference type="PDB" id="4CT1">
    <property type="method" value="X-ray"/>
    <property type="resolution" value="1.85 A"/>
    <property type="chains" value="A=50-359"/>
</dbReference>
<dbReference type="PDB" id="4CT2">
    <property type="method" value="X-ray"/>
    <property type="resolution" value="1.25 A"/>
    <property type="chains" value="A=50-359"/>
</dbReference>
<dbReference type="PDB" id="4RQK">
    <property type="method" value="X-ray"/>
    <property type="resolution" value="1.55 A"/>
    <property type="chains" value="A=50-359"/>
</dbReference>
<dbReference type="PDB" id="4RQV">
    <property type="method" value="X-ray"/>
    <property type="resolution" value="1.50 A"/>
    <property type="chains" value="A=50-359"/>
</dbReference>
<dbReference type="PDB" id="4RRV">
    <property type="method" value="X-ray"/>
    <property type="resolution" value="1.41 A"/>
    <property type="chains" value="A=50-359"/>
</dbReference>
<dbReference type="PDB" id="4XX9">
    <property type="method" value="X-ray"/>
    <property type="resolution" value="1.40 A"/>
    <property type="chains" value="A=50-359"/>
</dbReference>
<dbReference type="PDB" id="5ACK">
    <property type="method" value="X-ray"/>
    <property type="resolution" value="1.24 A"/>
    <property type="chains" value="A=50-359"/>
</dbReference>
<dbReference type="PDB" id="5HKM">
    <property type="method" value="X-ray"/>
    <property type="resolution" value="2.10 A"/>
    <property type="chains" value="A=51-359"/>
</dbReference>
<dbReference type="PDB" id="5HNG">
    <property type="method" value="X-ray"/>
    <property type="resolution" value="3.01 A"/>
    <property type="chains" value="A=51-359"/>
</dbReference>
<dbReference type="PDB" id="5HO7">
    <property type="method" value="X-ray"/>
    <property type="resolution" value="3.00 A"/>
    <property type="chains" value="A=51-359"/>
</dbReference>
<dbReference type="PDB" id="5HO8">
    <property type="method" value="X-ray"/>
    <property type="resolution" value="2.70 A"/>
    <property type="chains" value="A=51-359"/>
</dbReference>
<dbReference type="PDB" id="5LVL">
    <property type="method" value="X-ray"/>
    <property type="resolution" value="1.40 A"/>
    <property type="chains" value="A=50-359"/>
</dbReference>
<dbReference type="PDB" id="5LVM">
    <property type="method" value="X-ray"/>
    <property type="resolution" value="1.26 A"/>
    <property type="chains" value="A=50-359"/>
</dbReference>
<dbReference type="PDB" id="5LVN">
    <property type="method" value="X-ray"/>
    <property type="resolution" value="1.38 A"/>
    <property type="chains" value="A=50-359"/>
</dbReference>
<dbReference type="PDB" id="5LVO">
    <property type="method" value="X-ray"/>
    <property type="resolution" value="1.09 A"/>
    <property type="chains" value="A=50-359"/>
</dbReference>
<dbReference type="PDB" id="5LVP">
    <property type="method" value="X-ray"/>
    <property type="resolution" value="2.50 A"/>
    <property type="chains" value="A/B/C/D=50-359"/>
</dbReference>
<dbReference type="PDB" id="5MRD">
    <property type="method" value="X-ray"/>
    <property type="resolution" value="1.41 A"/>
    <property type="chains" value="A=50-359"/>
</dbReference>
<dbReference type="PDB" id="6WJQ">
    <property type="method" value="X-ray"/>
    <property type="resolution" value="2.71 A"/>
    <property type="chains" value="C/D=2-16"/>
</dbReference>
<dbReference type="PDB" id="8DQT">
    <property type="method" value="X-ray"/>
    <property type="resolution" value="1.31 A"/>
    <property type="chains" value="A=50-359"/>
</dbReference>
<dbReference type="PDBsum" id="1H1W"/>
<dbReference type="PDBsum" id="1OKY"/>
<dbReference type="PDBsum" id="1OKZ"/>
<dbReference type="PDBsum" id="1UU3"/>
<dbReference type="PDBsum" id="1UU7"/>
<dbReference type="PDBsum" id="1UU8"/>
<dbReference type="PDBsum" id="1UU9"/>
<dbReference type="PDBsum" id="1UVR"/>
<dbReference type="PDBsum" id="1W1D"/>
<dbReference type="PDBsum" id="1W1G"/>
<dbReference type="PDBsum" id="1W1H"/>
<dbReference type="PDBsum" id="1Z5M"/>
<dbReference type="PDBsum" id="2BIY"/>
<dbReference type="PDBsum" id="2PE0"/>
<dbReference type="PDBsum" id="2PE1"/>
<dbReference type="PDBsum" id="2PE2"/>
<dbReference type="PDBsum" id="2R7B"/>
<dbReference type="PDBsum" id="2VKI"/>
<dbReference type="PDBsum" id="2XCH"/>
<dbReference type="PDBsum" id="2XCK"/>
<dbReference type="PDBsum" id="3H9O"/>
<dbReference type="PDBsum" id="3HRC"/>
<dbReference type="PDBsum" id="3HRF"/>
<dbReference type="PDBsum" id="3ION"/>
<dbReference type="PDBsum" id="3IOP"/>
<dbReference type="PDBsum" id="3NAX"/>
<dbReference type="PDBsum" id="3NAY"/>
<dbReference type="PDBsum" id="3NUN"/>
<dbReference type="PDBsum" id="3NUS"/>
<dbReference type="PDBsum" id="3NUU"/>
<dbReference type="PDBsum" id="3NUY"/>
<dbReference type="PDBsum" id="3ORX"/>
<dbReference type="PDBsum" id="3ORZ"/>
<dbReference type="PDBsum" id="3OTU"/>
<dbReference type="PDBsum" id="3PWY"/>
<dbReference type="PDBsum" id="3QC4"/>
<dbReference type="PDBsum" id="3QCQ"/>
<dbReference type="PDBsum" id="3QCS"/>
<dbReference type="PDBsum" id="3QCX"/>
<dbReference type="PDBsum" id="3QCY"/>
<dbReference type="PDBsum" id="3QD0"/>
<dbReference type="PDBsum" id="3QD3"/>
<dbReference type="PDBsum" id="3QD4"/>
<dbReference type="PDBsum" id="3RCJ"/>
<dbReference type="PDBsum" id="3RWP"/>
<dbReference type="PDBsum" id="3RWQ"/>
<dbReference type="PDBsum" id="3SC1"/>
<dbReference type="PDBsum" id="4A06"/>
<dbReference type="PDBsum" id="4A07"/>
<dbReference type="PDBsum" id="4AW0"/>
<dbReference type="PDBsum" id="4AW1"/>
<dbReference type="PDBsum" id="4CT1"/>
<dbReference type="PDBsum" id="4CT2"/>
<dbReference type="PDBsum" id="4RQK"/>
<dbReference type="PDBsum" id="4RQV"/>
<dbReference type="PDBsum" id="4RRV"/>
<dbReference type="PDBsum" id="4XX9"/>
<dbReference type="PDBsum" id="5ACK"/>
<dbReference type="PDBsum" id="5HKM"/>
<dbReference type="PDBsum" id="5HNG"/>
<dbReference type="PDBsum" id="5HO7"/>
<dbReference type="PDBsum" id="5HO8"/>
<dbReference type="PDBsum" id="5LVL"/>
<dbReference type="PDBsum" id="5LVM"/>
<dbReference type="PDBsum" id="5LVN"/>
<dbReference type="PDBsum" id="5LVO"/>
<dbReference type="PDBsum" id="5LVP"/>
<dbReference type="PDBsum" id="5MRD"/>
<dbReference type="PDBsum" id="6WJQ"/>
<dbReference type="PDBsum" id="8DQT"/>
<dbReference type="SASBDB" id="O15530"/>
<dbReference type="SMR" id="O15530"/>
<dbReference type="BioGRID" id="111196">
    <property type="interactions" value="191"/>
</dbReference>
<dbReference type="CORUM" id="O15530"/>
<dbReference type="DIP" id="DIP-38372N"/>
<dbReference type="ELM" id="O15530"/>
<dbReference type="FunCoup" id="O15530">
    <property type="interactions" value="3509"/>
</dbReference>
<dbReference type="IntAct" id="O15530">
    <property type="interactions" value="152"/>
</dbReference>
<dbReference type="MINT" id="O15530"/>
<dbReference type="STRING" id="9606.ENSP00000344220"/>
<dbReference type="BindingDB" id="O15530"/>
<dbReference type="ChEMBL" id="CHEMBL2534"/>
<dbReference type="DrugBank" id="DB07132">
    <property type="generic name" value="1-{2-OXO-3-[(1R)-1-(1H-PYRROL-2-YL)ETHYL]-2H-INDOL-5-YL}UREA"/>
</dbReference>
<dbReference type="DrugBank" id="DB06932">
    <property type="generic name" value="10,11-dimethoxy-4-methyldibenzo[c,f]-2,7-naphthyridine-3,6-diamine"/>
</dbReference>
<dbReference type="DrugBank" id="DB07300">
    <property type="generic name" value="2-(1H-imidazol-1-yl)-9-methoxy-8-(2-methoxyethoxy)benzo[c][2,7]naphthyridin-4-amine"/>
</dbReference>
<dbReference type="DrugBank" id="DB07456">
    <property type="generic name" value="3-(1H-indol-3-yl)-4-(1-{2-[(2S)-1-methylpyrrolidinyl]ethyl}-1H-indol-3-yl)-1H-pyrrole-2,5-dione"/>
</dbReference>
<dbReference type="DrugBank" id="DB07457">
    <property type="generic name" value="3-[1-(3-AMINOPROPYL)-1H-INDOL-3-YL]-4-(1H-INDOL-3-YL)-1H-PYRROLE-2,5-DIONE"/>
</dbReference>
<dbReference type="DrugBank" id="DB07033">
    <property type="generic name" value="5-HYDROXY-3-[(1R)-1-(1H-PYRROL-2-YL)ETHYL]-2H-INDOL-2-ONE"/>
</dbReference>
<dbReference type="DrugBank" id="DB01933">
    <property type="generic name" value="7-Hydroxystaurosporine"/>
</dbReference>
<dbReference type="DrugBank" id="DB03777">
    <property type="generic name" value="Bisindolylmaleimide I"/>
</dbReference>
<dbReference type="DrugBank" id="DB01946">
    <property type="generic name" value="Bisindolylmaleimide VIII"/>
</dbReference>
<dbReference type="DrugBank" id="DB00482">
    <property type="generic name" value="Celecoxib"/>
</dbReference>
<dbReference type="DrugBank" id="DB04522">
    <property type="generic name" value="Dexfosfoserine"/>
</dbReference>
<dbReference type="DrugBank" id="DB12010">
    <property type="generic name" value="Fostamatinib"/>
</dbReference>
<dbReference type="DrugBank" id="DB01863">
    <property type="generic name" value="Inositol 1,3,4,5-Tetrakisphosphate"/>
</dbReference>
<dbReference type="DrugBank" id="DB02010">
    <property type="generic name" value="Staurosporine"/>
</dbReference>
<dbReference type="DrugCentral" id="O15530"/>
<dbReference type="GuidetoPHARMACOLOGY" id="1519"/>
<dbReference type="MoonDB" id="O15530">
    <property type="type" value="Predicted"/>
</dbReference>
<dbReference type="GlyGen" id="O15530">
    <property type="glycosylation" value="18 sites, 1 O-linked glycan (18 sites)"/>
</dbReference>
<dbReference type="iPTMnet" id="O15530"/>
<dbReference type="PhosphoSitePlus" id="O15530"/>
<dbReference type="BioMuta" id="PDPK1"/>
<dbReference type="CPTAC" id="CPTAC-1052"/>
<dbReference type="CPTAC" id="CPTAC-1540"/>
<dbReference type="jPOST" id="O15530"/>
<dbReference type="MassIVE" id="O15530"/>
<dbReference type="PaxDb" id="9606-ENSP00000344220"/>
<dbReference type="PeptideAtlas" id="O15530"/>
<dbReference type="ProteomicsDB" id="34858"/>
<dbReference type="ProteomicsDB" id="48736">
    <molecule id="O15530-1"/>
</dbReference>
<dbReference type="ProteomicsDB" id="48737">
    <molecule id="O15530-2"/>
</dbReference>
<dbReference type="ProteomicsDB" id="48738">
    <molecule id="O15530-3"/>
</dbReference>
<dbReference type="ProteomicsDB" id="48739">
    <molecule id="O15530-4"/>
</dbReference>
<dbReference type="Pumba" id="O15530"/>
<dbReference type="Antibodypedia" id="3794">
    <property type="antibodies" value="955 antibodies from 47 providers"/>
</dbReference>
<dbReference type="DNASU" id="5170"/>
<dbReference type="Ensembl" id="ENST00000268673.12">
    <molecule id="O15530-4"/>
    <property type="protein sequence ID" value="ENSP00000268673.7"/>
    <property type="gene ID" value="ENSG00000140992.20"/>
</dbReference>
<dbReference type="Ensembl" id="ENST00000342085.9">
    <molecule id="O15530-1"/>
    <property type="protein sequence ID" value="ENSP00000344220.4"/>
    <property type="gene ID" value="ENSG00000140992.20"/>
</dbReference>
<dbReference type="Ensembl" id="ENST00000441549.7">
    <molecule id="O15530-5"/>
    <property type="protein sequence ID" value="ENSP00000395357.3"/>
    <property type="gene ID" value="ENSG00000140992.20"/>
</dbReference>
<dbReference type="GeneID" id="5170"/>
<dbReference type="KEGG" id="hsa:5170"/>
<dbReference type="MANE-Select" id="ENST00000342085.9">
    <property type="protein sequence ID" value="ENSP00000344220.4"/>
    <property type="RefSeq nucleotide sequence ID" value="NM_002613.5"/>
    <property type="RefSeq protein sequence ID" value="NP_002604.1"/>
</dbReference>
<dbReference type="UCSC" id="uc002cqs.5">
    <molecule id="O15530-1"/>
    <property type="organism name" value="human"/>
</dbReference>
<dbReference type="AGR" id="HGNC:8816"/>
<dbReference type="CTD" id="5170"/>
<dbReference type="DisGeNET" id="5170"/>
<dbReference type="GeneCards" id="PDPK1"/>
<dbReference type="HGNC" id="HGNC:8816">
    <property type="gene designation" value="PDPK1"/>
</dbReference>
<dbReference type="HPA" id="ENSG00000140992">
    <property type="expression patterns" value="Low tissue specificity"/>
</dbReference>
<dbReference type="MIM" id="605213">
    <property type="type" value="gene"/>
</dbReference>
<dbReference type="neXtProt" id="NX_O15530"/>
<dbReference type="OpenTargets" id="ENSG00000140992"/>
<dbReference type="PharmGKB" id="PA33160"/>
<dbReference type="VEuPathDB" id="HostDB:ENSG00000140992"/>
<dbReference type="eggNOG" id="KOG0592">
    <property type="taxonomic scope" value="Eukaryota"/>
</dbReference>
<dbReference type="GeneTree" id="ENSGT00940000155267"/>
<dbReference type="InParanoid" id="O15530"/>
<dbReference type="OMA" id="QYRVPDN"/>
<dbReference type="OrthoDB" id="347657at2759"/>
<dbReference type="PAN-GO" id="O15530">
    <property type="GO annotations" value="3 GO annotations based on evolutionary models"/>
</dbReference>
<dbReference type="PhylomeDB" id="O15530"/>
<dbReference type="TreeFam" id="TF105423"/>
<dbReference type="BRENDA" id="2.7.11.1">
    <property type="organism ID" value="2681"/>
</dbReference>
<dbReference type="PathwayCommons" id="O15530"/>
<dbReference type="Reactome" id="R-HSA-114604">
    <property type="pathway name" value="GPVI-mediated activation cascade"/>
</dbReference>
<dbReference type="Reactome" id="R-HSA-1257604">
    <property type="pathway name" value="PIP3 activates AKT signaling"/>
</dbReference>
<dbReference type="Reactome" id="R-HSA-165158">
    <property type="pathway name" value="Activation of AKT2"/>
</dbReference>
<dbReference type="Reactome" id="R-HSA-202424">
    <property type="pathway name" value="Downstream TCR signaling"/>
</dbReference>
<dbReference type="Reactome" id="R-HSA-2730905">
    <property type="pathway name" value="Role of LAT2/NTAL/LAB on calcium mobilization"/>
</dbReference>
<dbReference type="Reactome" id="R-HSA-2871837">
    <property type="pathway name" value="FCERI mediated NF-kB activation"/>
</dbReference>
<dbReference type="Reactome" id="R-HSA-354192">
    <property type="pathway name" value="Integrin signaling"/>
</dbReference>
<dbReference type="Reactome" id="R-HSA-389357">
    <property type="pathway name" value="CD28 dependent PI3K/Akt signaling"/>
</dbReference>
<dbReference type="Reactome" id="R-HSA-392451">
    <property type="pathway name" value="G beta:gamma signalling through PI3Kgamma"/>
</dbReference>
<dbReference type="Reactome" id="R-HSA-444257">
    <property type="pathway name" value="RSK activation"/>
</dbReference>
<dbReference type="Reactome" id="R-HSA-5218920">
    <property type="pathway name" value="VEGFR2 mediated vascular permeability"/>
</dbReference>
<dbReference type="Reactome" id="R-HSA-5218921">
    <property type="pathway name" value="VEGFR2 mediated cell proliferation"/>
</dbReference>
<dbReference type="Reactome" id="R-HSA-5607764">
    <property type="pathway name" value="CLEC7A (Dectin-1) signaling"/>
</dbReference>
<dbReference type="Reactome" id="R-HSA-5625740">
    <property type="pathway name" value="RHO GTPases activate PKNs"/>
</dbReference>
<dbReference type="Reactome" id="R-HSA-5674400">
    <property type="pathway name" value="Constitutive Signaling by AKT1 E17K in Cancer"/>
</dbReference>
<dbReference type="Reactome" id="R-HSA-6804757">
    <property type="pathway name" value="Regulation of TP53 Degradation"/>
</dbReference>
<dbReference type="Reactome" id="R-HSA-9634635">
    <property type="pathway name" value="Estrogen-stimulated signaling through PRKCZ"/>
</dbReference>
<dbReference type="Reactome" id="R-HSA-9735871">
    <property type="pathway name" value="SARS-CoV-1 targets host intracellular signalling and regulatory pathways"/>
</dbReference>
<dbReference type="Reactome" id="R-HSA-9755779">
    <property type="pathway name" value="SARS-CoV-2 targets host intracellular signalling and regulatory pathways"/>
</dbReference>
<dbReference type="Reactome" id="R-HSA-9856530">
    <property type="pathway name" value="High laminar flow shear stress activates signaling by PIEZO1 and PECAM1:CDH5:KDR in endothelial cells"/>
</dbReference>
<dbReference type="SABIO-RK" id="O15530"/>
<dbReference type="SignaLink" id="O15530"/>
<dbReference type="SIGNOR" id="O15530"/>
<dbReference type="BioGRID-ORCS" id="5170">
    <property type="hits" value="578 hits in 1207 CRISPR screens"/>
</dbReference>
<dbReference type="ChiTaRS" id="PDPK1">
    <property type="organism name" value="human"/>
</dbReference>
<dbReference type="EvolutionaryTrace" id="O15530"/>
<dbReference type="GeneWiki" id="Phosphoinositide-dependent_kinase-1"/>
<dbReference type="GenomeRNAi" id="5170"/>
<dbReference type="Pharos" id="O15530">
    <property type="development level" value="Tchem"/>
</dbReference>
<dbReference type="PRO" id="PR:O15530"/>
<dbReference type="Proteomes" id="UP000005640">
    <property type="component" value="Chromosome 16"/>
</dbReference>
<dbReference type="RNAct" id="O15530">
    <property type="molecule type" value="protein"/>
</dbReference>
<dbReference type="Bgee" id="ENSG00000140992">
    <property type="expression patterns" value="Expressed in secondary oocyte and 196 other cell types or tissues"/>
</dbReference>
<dbReference type="ExpressionAtlas" id="O15530">
    <property type="expression patterns" value="baseline and differential"/>
</dbReference>
<dbReference type="GO" id="GO:0042995">
    <property type="term" value="C:cell projection"/>
    <property type="evidence" value="ECO:0000314"/>
    <property type="project" value="BHF-UCL"/>
</dbReference>
<dbReference type="GO" id="GO:0005737">
    <property type="term" value="C:cytoplasm"/>
    <property type="evidence" value="ECO:0000314"/>
    <property type="project" value="UniProtKB"/>
</dbReference>
<dbReference type="GO" id="GO:0031410">
    <property type="term" value="C:cytoplasmic vesicle"/>
    <property type="evidence" value="ECO:0007669"/>
    <property type="project" value="Ensembl"/>
</dbReference>
<dbReference type="GO" id="GO:0005829">
    <property type="term" value="C:cytosol"/>
    <property type="evidence" value="ECO:0000314"/>
    <property type="project" value="HPA"/>
</dbReference>
<dbReference type="GO" id="GO:0005925">
    <property type="term" value="C:focal adhesion"/>
    <property type="evidence" value="ECO:0007669"/>
    <property type="project" value="UniProtKB-SubCell"/>
</dbReference>
<dbReference type="GO" id="GO:0005634">
    <property type="term" value="C:nucleus"/>
    <property type="evidence" value="ECO:0007669"/>
    <property type="project" value="UniProtKB-SubCell"/>
</dbReference>
<dbReference type="GO" id="GO:0005886">
    <property type="term" value="C:plasma membrane"/>
    <property type="evidence" value="ECO:0000314"/>
    <property type="project" value="UniProtKB"/>
</dbReference>
<dbReference type="GO" id="GO:0014069">
    <property type="term" value="C:postsynaptic density"/>
    <property type="evidence" value="ECO:0007669"/>
    <property type="project" value="Ensembl"/>
</dbReference>
<dbReference type="GO" id="GO:0004676">
    <property type="term" value="F:3-phosphoinositide-dependent protein kinase activity"/>
    <property type="evidence" value="ECO:0000314"/>
    <property type="project" value="BHF-UCL"/>
</dbReference>
<dbReference type="GO" id="GO:0005524">
    <property type="term" value="F:ATP binding"/>
    <property type="evidence" value="ECO:0007669"/>
    <property type="project" value="UniProtKB-KW"/>
</dbReference>
<dbReference type="GO" id="GO:0016004">
    <property type="term" value="F:phospholipase activator activity"/>
    <property type="evidence" value="ECO:0000315"/>
    <property type="project" value="BHF-UCL"/>
</dbReference>
<dbReference type="GO" id="GO:0043274">
    <property type="term" value="F:phospholipase binding"/>
    <property type="evidence" value="ECO:0000353"/>
    <property type="project" value="BHF-UCL"/>
</dbReference>
<dbReference type="GO" id="GO:0106310">
    <property type="term" value="F:protein serine kinase activity"/>
    <property type="evidence" value="ECO:0007669"/>
    <property type="project" value="RHEA"/>
</dbReference>
<dbReference type="GO" id="GO:0004674">
    <property type="term" value="F:protein serine/threonine kinase activity"/>
    <property type="evidence" value="ECO:0000314"/>
    <property type="project" value="BHF-UCL"/>
</dbReference>
<dbReference type="GO" id="GO:0030036">
    <property type="term" value="P:actin cytoskeleton organization"/>
    <property type="evidence" value="ECO:0000304"/>
    <property type="project" value="ProtInc"/>
</dbReference>
<dbReference type="GO" id="GO:0019722">
    <property type="term" value="P:calcium-mediated signaling"/>
    <property type="evidence" value="ECO:0000315"/>
    <property type="project" value="BHF-UCL"/>
</dbReference>
<dbReference type="GO" id="GO:0016477">
    <property type="term" value="P:cell migration"/>
    <property type="evidence" value="ECO:0000315"/>
    <property type="project" value="BHF-UCL"/>
</dbReference>
<dbReference type="GO" id="GO:0071364">
    <property type="term" value="P:cellular response to epidermal growth factor stimulus"/>
    <property type="evidence" value="ECO:0000315"/>
    <property type="project" value="BHF-UCL"/>
</dbReference>
<dbReference type="GO" id="GO:0032869">
    <property type="term" value="P:cellular response to insulin stimulus"/>
    <property type="evidence" value="ECO:0000315"/>
    <property type="project" value="BHF-UCL"/>
</dbReference>
<dbReference type="GO" id="GO:0007173">
    <property type="term" value="P:epidermal growth factor receptor signaling pathway"/>
    <property type="evidence" value="ECO:0000315"/>
    <property type="project" value="BHF-UCL"/>
</dbReference>
<dbReference type="GO" id="GO:0097191">
    <property type="term" value="P:extrinsic apoptotic signaling pathway"/>
    <property type="evidence" value="ECO:0000315"/>
    <property type="project" value="UniProtKB"/>
</dbReference>
<dbReference type="GO" id="GO:0006972">
    <property type="term" value="P:hyperosmotic response"/>
    <property type="evidence" value="ECO:0007669"/>
    <property type="project" value="Ensembl"/>
</dbReference>
<dbReference type="GO" id="GO:0008286">
    <property type="term" value="P:insulin receptor signaling pathway"/>
    <property type="evidence" value="ECO:0007669"/>
    <property type="project" value="Ensembl"/>
</dbReference>
<dbReference type="GO" id="GO:0048009">
    <property type="term" value="P:insulin-like growth factor receptor signaling pathway"/>
    <property type="evidence" value="ECO:0007669"/>
    <property type="project" value="Ensembl"/>
</dbReference>
<dbReference type="GO" id="GO:0035556">
    <property type="term" value="P:intracellular signal transduction"/>
    <property type="evidence" value="ECO:0000314"/>
    <property type="project" value="MGI"/>
</dbReference>
<dbReference type="GO" id="GO:0141124">
    <property type="term" value="P:intracellular signaling cassette"/>
    <property type="evidence" value="ECO:0000315"/>
    <property type="project" value="BHF-UCL"/>
</dbReference>
<dbReference type="GO" id="GO:0010667">
    <property type="term" value="P:negative regulation of cardiac muscle cell apoptotic process"/>
    <property type="evidence" value="ECO:0007669"/>
    <property type="project" value="Ensembl"/>
</dbReference>
<dbReference type="GO" id="GO:2000352">
    <property type="term" value="P:negative regulation of endothelial cell apoptotic process"/>
    <property type="evidence" value="ECO:0000315"/>
    <property type="project" value="BHF-UCL"/>
</dbReference>
<dbReference type="GO" id="GO:0034122">
    <property type="term" value="P:negative regulation of toll-like receptor signaling pathway"/>
    <property type="evidence" value="ECO:0007669"/>
    <property type="project" value="Ensembl"/>
</dbReference>
<dbReference type="GO" id="GO:0030512">
    <property type="term" value="P:negative regulation of transforming growth factor beta receptor signaling pathway"/>
    <property type="evidence" value="ECO:0000314"/>
    <property type="project" value="UniProtKB"/>
</dbReference>
<dbReference type="GO" id="GO:0043491">
    <property type="term" value="P:phosphatidylinositol 3-kinase/protein kinase B signal transduction"/>
    <property type="evidence" value="ECO:0000314"/>
    <property type="project" value="BHF-UCL"/>
</dbReference>
<dbReference type="GO" id="GO:0045766">
    <property type="term" value="P:positive regulation of angiogenesis"/>
    <property type="evidence" value="ECO:0000315"/>
    <property type="project" value="BHF-UCL"/>
</dbReference>
<dbReference type="GO" id="GO:0043536">
    <property type="term" value="P:positive regulation of blood vessel endothelial cell migration"/>
    <property type="evidence" value="ECO:0000315"/>
    <property type="project" value="BHF-UCL"/>
</dbReference>
<dbReference type="GO" id="GO:0051897">
    <property type="term" value="P:positive regulation of phosphatidylinositol 3-kinase/protein kinase B signal transduction"/>
    <property type="evidence" value="ECO:0000314"/>
    <property type="project" value="BHF-UCL"/>
</dbReference>
<dbReference type="GO" id="GO:1903078">
    <property type="term" value="P:positive regulation of protein localization to plasma membrane"/>
    <property type="evidence" value="ECO:0000315"/>
    <property type="project" value="BHF-UCL"/>
</dbReference>
<dbReference type="GO" id="GO:0051281">
    <property type="term" value="P:positive regulation of release of sequestered calcium ion into cytosol"/>
    <property type="evidence" value="ECO:0000314"/>
    <property type="project" value="BHF-UCL"/>
</dbReference>
<dbReference type="GO" id="GO:1903672">
    <property type="term" value="P:positive regulation of sprouting angiogenesis"/>
    <property type="evidence" value="ECO:0000315"/>
    <property type="project" value="BHF-UCL"/>
</dbReference>
<dbReference type="GO" id="GO:1905564">
    <property type="term" value="P:positive regulation of vascular endothelial cell proliferation"/>
    <property type="evidence" value="ECO:0000315"/>
    <property type="project" value="BHF-UCL"/>
</dbReference>
<dbReference type="GO" id="GO:0046777">
    <property type="term" value="P:protein autophosphorylation"/>
    <property type="evidence" value="ECO:0000304"/>
    <property type="project" value="UniProtKB"/>
</dbReference>
<dbReference type="GO" id="GO:0006468">
    <property type="term" value="P:protein phosphorylation"/>
    <property type="evidence" value="ECO:0000314"/>
    <property type="project" value="UniProtKB"/>
</dbReference>
<dbReference type="GO" id="GO:0043122">
    <property type="term" value="P:regulation of canonical NF-kappaB signal transduction"/>
    <property type="evidence" value="ECO:0000315"/>
    <property type="project" value="UniProtKB"/>
</dbReference>
<dbReference type="GO" id="GO:0043304">
    <property type="term" value="P:regulation of mast cell degranulation"/>
    <property type="evidence" value="ECO:0007669"/>
    <property type="project" value="Ensembl"/>
</dbReference>
<dbReference type="GO" id="GO:0031295">
    <property type="term" value="P:T cell costimulation"/>
    <property type="evidence" value="ECO:0000304"/>
    <property type="project" value="Reactome"/>
</dbReference>
<dbReference type="GO" id="GO:0003323">
    <property type="term" value="P:type B pancreatic cell development"/>
    <property type="evidence" value="ECO:0007669"/>
    <property type="project" value="Ensembl"/>
</dbReference>
<dbReference type="GO" id="GO:0097700">
    <property type="term" value="P:vascular endothelial cell response to laminar fluid shear stress"/>
    <property type="evidence" value="ECO:0000304"/>
    <property type="project" value="Reactome"/>
</dbReference>
<dbReference type="CDD" id="cd01262">
    <property type="entry name" value="PH_PDK1"/>
    <property type="match status" value="1"/>
</dbReference>
<dbReference type="CDD" id="cd05581">
    <property type="entry name" value="STKc_PDK1"/>
    <property type="match status" value="1"/>
</dbReference>
<dbReference type="FunFam" id="2.30.29.30:FF:000126">
    <property type="entry name" value="3-phosphoinositide dependent protein kinase 1"/>
    <property type="match status" value="1"/>
</dbReference>
<dbReference type="FunFam" id="1.10.510.10:FF:000163">
    <property type="entry name" value="3-phosphoinositide-dependent protein kinase 1"/>
    <property type="match status" value="1"/>
</dbReference>
<dbReference type="FunFam" id="3.30.200.20:FF:000257">
    <property type="entry name" value="3-phosphoinositide-dependent protein kinase 1"/>
    <property type="match status" value="1"/>
</dbReference>
<dbReference type="Gene3D" id="3.30.200.20">
    <property type="entry name" value="Phosphorylase Kinase, domain 1"/>
    <property type="match status" value="1"/>
</dbReference>
<dbReference type="Gene3D" id="2.30.29.30">
    <property type="entry name" value="Pleckstrin-homology domain (PH domain)/Phosphotyrosine-binding domain (PTB)"/>
    <property type="match status" value="1"/>
</dbReference>
<dbReference type="Gene3D" id="1.10.510.10">
    <property type="entry name" value="Transferase(Phosphotransferase) domain 1"/>
    <property type="match status" value="1"/>
</dbReference>
<dbReference type="InterPro" id="IPR011009">
    <property type="entry name" value="Kinase-like_dom_sf"/>
</dbReference>
<dbReference type="InterPro" id="IPR033931">
    <property type="entry name" value="PDK1-typ_PH"/>
</dbReference>
<dbReference type="InterPro" id="IPR039046">
    <property type="entry name" value="PDPK1"/>
</dbReference>
<dbReference type="InterPro" id="IPR011993">
    <property type="entry name" value="PH-like_dom_sf"/>
</dbReference>
<dbReference type="InterPro" id="IPR000719">
    <property type="entry name" value="Prot_kinase_dom"/>
</dbReference>
<dbReference type="InterPro" id="IPR017441">
    <property type="entry name" value="Protein_kinase_ATP_BS"/>
</dbReference>
<dbReference type="InterPro" id="IPR008271">
    <property type="entry name" value="Ser/Thr_kinase_AS"/>
</dbReference>
<dbReference type="InterPro" id="IPR050236">
    <property type="entry name" value="Ser_Thr_kinase_AGC"/>
</dbReference>
<dbReference type="PANTHER" id="PTHR24356:SF163">
    <property type="entry name" value="3-PHOSPHOINOSITIDE-DEPENDENT PROTEIN KINASE 1-RELATED"/>
    <property type="match status" value="1"/>
</dbReference>
<dbReference type="PANTHER" id="PTHR24356">
    <property type="entry name" value="SERINE/THREONINE-PROTEIN KINASE"/>
    <property type="match status" value="1"/>
</dbReference>
<dbReference type="Pfam" id="PF14593">
    <property type="entry name" value="PH_3"/>
    <property type="match status" value="1"/>
</dbReference>
<dbReference type="Pfam" id="PF00069">
    <property type="entry name" value="Pkinase"/>
    <property type="match status" value="1"/>
</dbReference>
<dbReference type="SMART" id="SM00220">
    <property type="entry name" value="S_TKc"/>
    <property type="match status" value="1"/>
</dbReference>
<dbReference type="SUPFAM" id="SSF50729">
    <property type="entry name" value="PH domain-like"/>
    <property type="match status" value="1"/>
</dbReference>
<dbReference type="SUPFAM" id="SSF56112">
    <property type="entry name" value="Protein kinase-like (PK-like)"/>
    <property type="match status" value="1"/>
</dbReference>
<dbReference type="PROSITE" id="PS00107">
    <property type="entry name" value="PROTEIN_KINASE_ATP"/>
    <property type="match status" value="1"/>
</dbReference>
<dbReference type="PROSITE" id="PS50011">
    <property type="entry name" value="PROTEIN_KINASE_DOM"/>
    <property type="match status" value="1"/>
</dbReference>
<dbReference type="PROSITE" id="PS00108">
    <property type="entry name" value="PROTEIN_KINASE_ST"/>
    <property type="match status" value="1"/>
</dbReference>
<evidence type="ECO:0000250" key="1"/>
<evidence type="ECO:0000250" key="2">
    <source>
        <dbReference type="UniProtKB" id="Q9Z2A0"/>
    </source>
</evidence>
<evidence type="ECO:0000255" key="3">
    <source>
        <dbReference type="PROSITE-ProRule" id="PRU00159"/>
    </source>
</evidence>
<evidence type="ECO:0000255" key="4">
    <source>
        <dbReference type="PROSITE-ProRule" id="PRU10027"/>
    </source>
</evidence>
<evidence type="ECO:0000256" key="5">
    <source>
        <dbReference type="SAM" id="MobiDB-lite"/>
    </source>
</evidence>
<evidence type="ECO:0000269" key="6">
    <source>
    </source>
</evidence>
<evidence type="ECO:0000269" key="7">
    <source>
    </source>
</evidence>
<evidence type="ECO:0000269" key="8">
    <source>
    </source>
</evidence>
<evidence type="ECO:0000269" key="9">
    <source>
    </source>
</evidence>
<evidence type="ECO:0000269" key="10">
    <source>
    </source>
</evidence>
<evidence type="ECO:0000269" key="11">
    <source>
    </source>
</evidence>
<evidence type="ECO:0000269" key="12">
    <source>
    </source>
</evidence>
<evidence type="ECO:0000269" key="13">
    <source>
    </source>
</evidence>
<evidence type="ECO:0000269" key="14">
    <source>
    </source>
</evidence>
<evidence type="ECO:0000269" key="15">
    <source>
    </source>
</evidence>
<evidence type="ECO:0000269" key="16">
    <source>
    </source>
</evidence>
<evidence type="ECO:0000269" key="17">
    <source>
    </source>
</evidence>
<evidence type="ECO:0000269" key="18">
    <source>
    </source>
</evidence>
<evidence type="ECO:0000269" key="19">
    <source>
    </source>
</evidence>
<evidence type="ECO:0000269" key="20">
    <source>
    </source>
</evidence>
<evidence type="ECO:0000269" key="21">
    <source>
    </source>
</evidence>
<evidence type="ECO:0000269" key="22">
    <source>
    </source>
</evidence>
<evidence type="ECO:0000269" key="23">
    <source>
    </source>
</evidence>
<evidence type="ECO:0000269" key="24">
    <source>
    </source>
</evidence>
<evidence type="ECO:0000269" key="25">
    <source>
    </source>
</evidence>
<evidence type="ECO:0000269" key="26">
    <source>
    </source>
</evidence>
<evidence type="ECO:0000269" key="27">
    <source>
    </source>
</evidence>
<evidence type="ECO:0000269" key="28">
    <source>
    </source>
</evidence>
<evidence type="ECO:0000269" key="29">
    <source>
    </source>
</evidence>
<evidence type="ECO:0000269" key="30">
    <source>
    </source>
</evidence>
<evidence type="ECO:0000269" key="31">
    <source>
    </source>
</evidence>
<evidence type="ECO:0000269" key="32">
    <source>
    </source>
</evidence>
<evidence type="ECO:0000269" key="33">
    <source>
    </source>
</evidence>
<evidence type="ECO:0000269" key="34">
    <source>
    </source>
</evidence>
<evidence type="ECO:0000269" key="35">
    <source>
    </source>
</evidence>
<evidence type="ECO:0000269" key="36">
    <source>
    </source>
</evidence>
<evidence type="ECO:0000269" key="37">
    <source>
    </source>
</evidence>
<evidence type="ECO:0000269" key="38">
    <source>
    </source>
</evidence>
<evidence type="ECO:0000269" key="39">
    <source>
    </source>
</evidence>
<evidence type="ECO:0000269" key="40">
    <source>
    </source>
</evidence>
<evidence type="ECO:0000269" key="41">
    <source ref="8"/>
</evidence>
<evidence type="ECO:0000303" key="42">
    <source>
    </source>
</evidence>
<evidence type="ECO:0000303" key="43">
    <source>
    </source>
</evidence>
<evidence type="ECO:0000303" key="44">
    <source ref="5"/>
</evidence>
<evidence type="ECO:0000305" key="45"/>
<evidence type="ECO:0000305" key="46">
    <source>
    </source>
</evidence>
<evidence type="ECO:0007829" key="47">
    <source>
        <dbReference type="PDB" id="1W1G"/>
    </source>
</evidence>
<evidence type="ECO:0007829" key="48">
    <source>
        <dbReference type="PDB" id="3ORX"/>
    </source>
</evidence>
<evidence type="ECO:0007829" key="49">
    <source>
        <dbReference type="PDB" id="3OTU"/>
    </source>
</evidence>
<evidence type="ECO:0007829" key="50">
    <source>
        <dbReference type="PDB" id="3PWY"/>
    </source>
</evidence>
<evidence type="ECO:0007829" key="51">
    <source>
        <dbReference type="PDB" id="3QD3"/>
    </source>
</evidence>
<evidence type="ECO:0007829" key="52">
    <source>
        <dbReference type="PDB" id="5LVO"/>
    </source>
</evidence>
<evidence type="ECO:0007829" key="53">
    <source>
        <dbReference type="PDB" id="6WJQ"/>
    </source>
</evidence>
<protein>
    <recommendedName>
        <fullName>3-phosphoinositide-dependent protein kinase 1</fullName>
        <shortName>hPDK1</shortName>
        <ecNumber evidence="35">2.7.11.1</ecNumber>
    </recommendedName>
</protein>
<name>PDPK1_HUMAN</name>